<proteinExistence type="evidence at protein level"/>
<gene>
    <name type="primary">MID2</name>
    <name type="synonym">FXY2</name>
    <name type="synonym">RNF60</name>
    <name type="synonym">TRIM1</name>
</gene>
<organism>
    <name type="scientific">Homo sapiens</name>
    <name type="common">Human</name>
    <dbReference type="NCBI Taxonomy" id="9606"/>
    <lineage>
        <taxon>Eukaryota</taxon>
        <taxon>Metazoa</taxon>
        <taxon>Chordata</taxon>
        <taxon>Craniata</taxon>
        <taxon>Vertebrata</taxon>
        <taxon>Euteleostomi</taxon>
        <taxon>Mammalia</taxon>
        <taxon>Eutheria</taxon>
        <taxon>Euarchontoglires</taxon>
        <taxon>Primates</taxon>
        <taxon>Haplorrhini</taxon>
        <taxon>Catarrhini</taxon>
        <taxon>Hominidae</taxon>
        <taxon>Homo</taxon>
    </lineage>
</organism>
<keyword id="KW-0002">3D-structure</keyword>
<keyword id="KW-0025">Alternative splicing</keyword>
<keyword id="KW-0175">Coiled coil</keyword>
<keyword id="KW-0963">Cytoplasm</keyword>
<keyword id="KW-0206">Cytoskeleton</keyword>
<keyword id="KW-0225">Disease variant</keyword>
<keyword id="KW-0991">Intellectual disability</keyword>
<keyword id="KW-0479">Metal-binding</keyword>
<keyword id="KW-0493">Microtubule</keyword>
<keyword id="KW-0597">Phosphoprotein</keyword>
<keyword id="KW-1267">Proteomics identification</keyword>
<keyword id="KW-1185">Reference proteome</keyword>
<keyword id="KW-0677">Repeat</keyword>
<keyword id="KW-0808">Transferase</keyword>
<keyword id="KW-0833">Ubl conjugation pathway</keyword>
<keyword id="KW-0862">Zinc</keyword>
<keyword id="KW-0863">Zinc-finger</keyword>
<protein>
    <recommendedName>
        <fullName>Probable E3 ubiquitin-protein ligase MID2</fullName>
        <ecNumber evidence="9">2.3.2.27</ecNumber>
    </recommendedName>
    <alternativeName>
        <fullName>Midin-2</fullName>
    </alternativeName>
    <alternativeName>
        <fullName>Midline defect 2</fullName>
    </alternativeName>
    <alternativeName>
        <fullName>Midline-2</fullName>
    </alternativeName>
    <alternativeName>
        <fullName>RING finger protein 60</fullName>
    </alternativeName>
    <alternativeName>
        <fullName evidence="14">RING-type E3 ubiquitin transferase MID2</fullName>
    </alternativeName>
    <alternativeName>
        <fullName>Tripartite motif-containing protein 1</fullName>
    </alternativeName>
</protein>
<comment type="function">
    <text evidence="9 12">E3 ubiquitin ligase that plays a role in microtubule stabilization. Mediates the 'Lys-48'-linked polyubiquitination of LRRK2 to drive its localization to microtubules and its proteasomal degradation in neurons. This ubiquitination inhibits LRRK2 kinase activation by RAB29 (PubMed:35266954).</text>
</comment>
<comment type="catalytic activity">
    <reaction evidence="9">
        <text>S-ubiquitinyl-[E2 ubiquitin-conjugating enzyme]-L-cysteine + [acceptor protein]-L-lysine = [E2 ubiquitin-conjugating enzyme]-L-cysteine + N(6)-ubiquitinyl-[acceptor protein]-L-lysine.</text>
        <dbReference type="EC" id="2.3.2.27"/>
    </reaction>
</comment>
<comment type="pathway">
    <text>Protein modification; protein ubiquitination.</text>
</comment>
<comment type="subunit">
    <text evidence="7">Homodimer or heterodimer with MID1. Interacts with IGBP1.</text>
</comment>
<comment type="interaction">
    <interactant intactId="EBI-10172526">
        <id>Q9UJV3-2</id>
    </interactant>
    <interactant intactId="EBI-10173507">
        <id>Q6UY14-3</id>
        <label>ADAMTSL4</label>
    </interactant>
    <organismsDiffer>false</organismsDiffer>
    <experiments>6</experiments>
</comment>
<comment type="interaction">
    <interactant intactId="EBI-10172526">
        <id>Q9UJV3-2</id>
    </interactant>
    <interactant intactId="EBI-8637627">
        <id>Q8WTP8</id>
        <label>AEN</label>
    </interactant>
    <organismsDiffer>false</organismsDiffer>
    <experiments>3</experiments>
</comment>
<comment type="interaction">
    <interactant intactId="EBI-10172526">
        <id>Q9UJV3-2</id>
    </interactant>
    <interactant intactId="EBI-2558314">
        <id>P43353</id>
        <label>ALDH3B1</label>
    </interactant>
    <organismsDiffer>false</organismsDiffer>
    <experiments>3</experiments>
</comment>
<comment type="interaction">
    <interactant intactId="EBI-10172526">
        <id>Q9UJV3-2</id>
    </interactant>
    <interactant intactId="EBI-11954519">
        <id>Q49AR9</id>
        <label>ANKS1A</label>
    </interactant>
    <organismsDiffer>false</organismsDiffer>
    <experiments>3</experiments>
</comment>
<comment type="interaction">
    <interactant intactId="EBI-10172526">
        <id>Q9UJV3-2</id>
    </interactant>
    <interactant intactId="EBI-541426">
        <id>Q9BXS5</id>
        <label>AP1M1</label>
    </interactant>
    <organismsDiffer>false</organismsDiffer>
    <experiments>3</experiments>
</comment>
<comment type="interaction">
    <interactant intactId="EBI-10172526">
        <id>Q9UJV3-2</id>
    </interactant>
    <interactant intactId="EBI-745213">
        <id>P29972</id>
        <label>AQP1</label>
    </interactant>
    <organismsDiffer>false</organismsDiffer>
    <experiments>3</experiments>
</comment>
<comment type="interaction">
    <interactant intactId="EBI-10172526">
        <id>Q9UJV3-2</id>
    </interactant>
    <interactant intactId="EBI-602199">
        <id>Q12774</id>
        <label>ARHGEF5</label>
    </interactant>
    <organismsDiffer>false</organismsDiffer>
    <experiments>3</experiments>
</comment>
<comment type="interaction">
    <interactant intactId="EBI-10172526">
        <id>Q9UJV3-2</id>
    </interactant>
    <interactant intactId="EBI-2866142">
        <id>Q32MH5</id>
        <label>ATOSA</label>
    </interactant>
    <organismsDiffer>false</organismsDiffer>
    <experiments>3</experiments>
</comment>
<comment type="interaction">
    <interactant intactId="EBI-10172526">
        <id>Q9UJV3-2</id>
    </interactant>
    <interactant intactId="EBI-745689">
        <id>Q7L5A3</id>
        <label>ATOSB</label>
    </interactant>
    <organismsDiffer>false</organismsDiffer>
    <experiments>3</experiments>
</comment>
<comment type="interaction">
    <interactant intactId="EBI-10172526">
        <id>Q9UJV3-2</id>
    </interactant>
    <interactant intactId="EBI-747353">
        <id>Q8WXE1</id>
        <label>ATRIP</label>
    </interactant>
    <organismsDiffer>false</organismsDiffer>
    <experiments>3</experiments>
</comment>
<comment type="interaction">
    <interactant intactId="EBI-10172526">
        <id>Q9UJV3-2</id>
    </interactant>
    <interactant intactId="EBI-16429430">
        <id>A0A0S2Z4M1</id>
        <label>AXIN1</label>
    </interactant>
    <organismsDiffer>false</organismsDiffer>
    <experiments>3</experiments>
</comment>
<comment type="interaction">
    <interactant intactId="EBI-10172526">
        <id>Q9UJV3-2</id>
    </interactant>
    <interactant intactId="EBI-710484">
        <id>O15169</id>
        <label>AXIN1</label>
    </interactant>
    <organismsDiffer>false</organismsDiffer>
    <experiments>3</experiments>
</comment>
<comment type="interaction">
    <interactant intactId="EBI-10172526">
        <id>Q9UJV3-2</id>
    </interactant>
    <interactant intactId="EBI-742750">
        <id>Q8TBE0</id>
        <label>BAHD1</label>
    </interactant>
    <organismsDiffer>false</organismsDiffer>
    <experiments>3</experiments>
</comment>
<comment type="interaction">
    <interactant intactId="EBI-10172526">
        <id>Q9UJV3-2</id>
    </interactant>
    <interactant intactId="EBI-10174813">
        <id>A8KA13</id>
        <label>BCL6B</label>
    </interactant>
    <organismsDiffer>false</organismsDiffer>
    <experiments>6</experiments>
</comment>
<comment type="interaction">
    <interactant intactId="EBI-10172526">
        <id>Q9UJV3-2</id>
    </interactant>
    <interactant intactId="EBI-2105445">
        <id>P51451</id>
        <label>BLK</label>
    </interactant>
    <organismsDiffer>false</organismsDiffer>
    <experiments>3</experiments>
</comment>
<comment type="interaction">
    <interactant intactId="EBI-10172526">
        <id>Q9UJV3-2</id>
    </interactant>
    <interactant intactId="EBI-2548012">
        <id>Q9H2G9</id>
        <label>BLZF1</label>
    </interactant>
    <organismsDiffer>false</organismsDiffer>
    <experiments>5</experiments>
</comment>
<comment type="interaction">
    <interactant intactId="EBI-10172526">
        <id>Q9UJV3-2</id>
    </interactant>
    <interactant intactId="EBI-5666615">
        <id>Q5PSV4</id>
        <label>BRMS1L</label>
    </interactant>
    <organismsDiffer>false</organismsDiffer>
    <experiments>3</experiments>
</comment>
<comment type="interaction">
    <interactant intactId="EBI-10172526">
        <id>Q9UJV3-2</id>
    </interactant>
    <interactant intactId="EBI-358049">
        <id>Q13895</id>
        <label>BYSL</label>
    </interactant>
    <organismsDiffer>false</organismsDiffer>
    <experiments>8</experiments>
</comment>
<comment type="interaction">
    <interactant intactId="EBI-10172526">
        <id>Q9UJV3-2</id>
    </interactant>
    <interactant intactId="EBI-739580">
        <id>Q13137</id>
        <label>CALCOCO2</label>
    </interactant>
    <organismsDiffer>false</organismsDiffer>
    <experiments>3</experiments>
</comment>
<comment type="interaction">
    <interactant intactId="EBI-10172526">
        <id>Q9UJV3-2</id>
    </interactant>
    <interactant intactId="EBI-11530605">
        <id>Q9H257-2</id>
        <label>CARD9</label>
    </interactant>
    <organismsDiffer>false</organismsDiffer>
    <experiments>3</experiments>
</comment>
<comment type="interaction">
    <interactant intactId="EBI-10172526">
        <id>Q9UJV3-2</id>
    </interactant>
    <interactant intactId="EBI-718719">
        <id>Q9Y2V2</id>
        <label>CARHSP1</label>
    </interactant>
    <organismsDiffer>false</organismsDiffer>
    <experiments>3</experiments>
</comment>
<comment type="interaction">
    <interactant intactId="EBI-10172526">
        <id>Q9UJV3-2</id>
    </interactant>
    <interactant intactId="EBI-712912">
        <id>Q9HC52</id>
        <label>CBX8</label>
    </interactant>
    <organismsDiffer>false</organismsDiffer>
    <experiments>6</experiments>
</comment>
<comment type="interaction">
    <interactant intactId="EBI-10172526">
        <id>Q9UJV3-2</id>
    </interactant>
    <interactant intactId="EBI-744556">
        <id>Q96HB5</id>
        <label>CCDC120</label>
    </interactant>
    <organismsDiffer>false</organismsDiffer>
    <experiments>3</experiments>
</comment>
<comment type="interaction">
    <interactant intactId="EBI-10172526">
        <id>Q9UJV3-2</id>
    </interactant>
    <interactant intactId="EBI-10185348">
        <id>Q96HB5-4</id>
        <label>CCDC120</label>
    </interactant>
    <organismsDiffer>false</organismsDiffer>
    <experiments>3</experiments>
</comment>
<comment type="interaction">
    <interactant intactId="EBI-10172526">
        <id>Q9UJV3-2</id>
    </interactant>
    <interactant intactId="EBI-740814">
        <id>Q8N715</id>
        <label>CCDC185</label>
    </interactant>
    <organismsDiffer>false</organismsDiffer>
    <experiments>3</experiments>
</comment>
<comment type="interaction">
    <interactant intactId="EBI-10172526">
        <id>Q9UJV3-2</id>
    </interactant>
    <interactant intactId="EBI-747041">
        <id>Q96M95</id>
        <label>CCDC42</label>
    </interactant>
    <organismsDiffer>false</organismsDiffer>
    <experiments>3</experiments>
</comment>
<comment type="interaction">
    <interactant intactId="EBI-10172526">
        <id>Q9UJV3-2</id>
    </interactant>
    <interactant intactId="EBI-11750401">
        <id>Q96M95-2</id>
        <label>CCDC42</label>
    </interactant>
    <organismsDiffer>false</organismsDiffer>
    <experiments>3</experiments>
</comment>
<comment type="interaction">
    <interactant intactId="EBI-10172526">
        <id>Q9UJV3-2</id>
    </interactant>
    <interactant intactId="EBI-10175300">
        <id>Q8TD31-3</id>
        <label>CCHCR1</label>
    </interactant>
    <organismsDiffer>false</organismsDiffer>
    <experiments>6</experiments>
</comment>
<comment type="interaction">
    <interactant intactId="EBI-10172526">
        <id>Q9UJV3-2</id>
    </interactant>
    <interactant intactId="EBI-746238">
        <id>Q07002</id>
        <label>CDK18</label>
    </interactant>
    <organismsDiffer>false</organismsDiffer>
    <experiments>3</experiments>
</comment>
<comment type="interaction">
    <interactant intactId="EBI-10172526">
        <id>Q9UJV3-2</id>
    </interactant>
    <interactant intactId="EBI-1104570">
        <id>Q8IYX8</id>
        <label>CEP57L1</label>
    </interactant>
    <organismsDiffer>false</organismsDiffer>
    <experiments>3</experiments>
</comment>
<comment type="interaction">
    <interactant intactId="EBI-10172526">
        <id>Q9UJV3-2</id>
    </interactant>
    <interactant intactId="EBI-10181988">
        <id>Q8IYX8-2</id>
        <label>CEP57L1</label>
    </interactant>
    <organismsDiffer>false</organismsDiffer>
    <experiments>3</experiments>
</comment>
<comment type="interaction">
    <interactant intactId="EBI-10172526">
        <id>Q9UJV3-2</id>
    </interactant>
    <interactant intactId="EBI-9038570">
        <id>P27918</id>
        <label>CFP</label>
    </interactant>
    <organismsDiffer>false</organismsDiffer>
    <experiments>3</experiments>
</comment>
<comment type="interaction">
    <interactant intactId="EBI-10172526">
        <id>Q9UJV3-2</id>
    </interactant>
    <interactant intactId="EBI-1210503">
        <id>O14647</id>
        <label>CHD2</label>
    </interactant>
    <organismsDiffer>false</organismsDiffer>
    <experiments>3</experiments>
</comment>
<comment type="interaction">
    <interactant intactId="EBI-10172526">
        <id>Q9UJV3-2</id>
    </interactant>
    <interactant intactId="EBI-741032">
        <id>Q8NE01</id>
        <label>CNNM3</label>
    </interactant>
    <organismsDiffer>false</organismsDiffer>
    <experiments>3</experiments>
</comment>
<comment type="interaction">
    <interactant intactId="EBI-10172526">
        <id>Q9UJV3-2</id>
    </interactant>
    <interactant intactId="EBI-1053725">
        <id>P10606</id>
        <label>COX5B</label>
    </interactant>
    <organismsDiffer>false</organismsDiffer>
    <experiments>3</experiments>
</comment>
<comment type="interaction">
    <interactant intactId="EBI-10172526">
        <id>Q9UJV3-2</id>
    </interactant>
    <interactant intactId="EBI-13063650">
        <id>O95639-2</id>
        <label>CPSF4</label>
    </interactant>
    <organismsDiffer>false</organismsDiffer>
    <experiments>3</experiments>
</comment>
<comment type="interaction">
    <interactant intactId="EBI-10172526">
        <id>Q9UJV3-2</id>
    </interactant>
    <interactant intactId="EBI-739773">
        <id>Q9BSW2</id>
        <label>CRACR2A</label>
    </interactant>
    <organismsDiffer>false</organismsDiffer>
    <experiments>3</experiments>
</comment>
<comment type="interaction">
    <interactant intactId="EBI-10172526">
        <id>Q9UJV3-2</id>
    </interactant>
    <interactant intactId="EBI-1042699">
        <id>Q8IUR6</id>
        <label>CREBRF</label>
    </interactant>
    <organismsDiffer>false</organismsDiffer>
    <experiments>3</experiments>
</comment>
<comment type="interaction">
    <interactant intactId="EBI-10172526">
        <id>Q9UJV3-2</id>
    </interactant>
    <interactant intactId="EBI-8636823">
        <id>Q9UBR2</id>
        <label>CTSZ</label>
    </interactant>
    <organismsDiffer>false</organismsDiffer>
    <experiments>6</experiments>
</comment>
<comment type="interaction">
    <interactant intactId="EBI-10172526">
        <id>Q9UJV3-2</id>
    </interactant>
    <interactant intactId="EBI-8646694">
        <id>O43602</id>
        <label>DCX</label>
    </interactant>
    <organismsDiffer>false</organismsDiffer>
    <experiments>3</experiments>
</comment>
<comment type="interaction">
    <interactant intactId="EBI-10172526">
        <id>Q9UJV3-2</id>
    </interactant>
    <interactant intactId="EBI-14148644">
        <id>O43602-2</id>
        <label>DCX</label>
    </interactant>
    <organismsDiffer>false</organismsDiffer>
    <experiments>3</experiments>
</comment>
<comment type="interaction">
    <interactant intactId="EBI-10172526">
        <id>Q9UJV3-2</id>
    </interactant>
    <interactant intactId="EBI-742953">
        <id>Q9BY27</id>
        <label>DGCR6L</label>
    </interactant>
    <organismsDiffer>false</organismsDiffer>
    <experiments>6</experiments>
</comment>
<comment type="interaction">
    <interactant intactId="EBI-10172526">
        <id>Q9UJV3-2</id>
    </interactant>
    <interactant intactId="EBI-9679045">
        <id>Q9NQL9</id>
        <label>DMRT3</label>
    </interactant>
    <organismsDiffer>false</organismsDiffer>
    <experiments>6</experiments>
</comment>
<comment type="interaction">
    <interactant intactId="EBI-10172526">
        <id>Q9UJV3-2</id>
    </interactant>
    <interactant intactId="EBI-740680">
        <id>Q8WWB3</id>
        <label>DYDC1</label>
    </interactant>
    <organismsDiffer>false</organismsDiffer>
    <experiments>3</experiments>
</comment>
<comment type="interaction">
    <interactant intactId="EBI-10172526">
        <id>Q9UJV3-2</id>
    </interactant>
    <interactant intactId="EBI-2349927">
        <id>Q5JST6</id>
        <label>EFHC2</label>
    </interactant>
    <organismsDiffer>false</organismsDiffer>
    <experiments>3</experiments>
</comment>
<comment type="interaction">
    <interactant intactId="EBI-10172526">
        <id>Q9UJV3-2</id>
    </interactant>
    <interactant intactId="EBI-949532">
        <id>Q9UHF1</id>
        <label>EGFL7</label>
    </interactant>
    <organismsDiffer>false</organismsDiffer>
    <experiments>3</experiments>
</comment>
<comment type="interaction">
    <interactant intactId="EBI-10172526">
        <id>Q9UJV3-2</id>
    </interactant>
    <interactant intactId="EBI-750700">
        <id>Q8N9N8</id>
        <label>EIF1AD</label>
    </interactant>
    <organismsDiffer>false</organismsDiffer>
    <experiments>3</experiments>
</comment>
<comment type="interaction">
    <interactant intactId="EBI-10172526">
        <id>Q9UJV3-2</id>
    </interactant>
    <interactant intactId="EBI-742350">
        <id>Q14241</id>
        <label>ELOA</label>
    </interactant>
    <organismsDiffer>false</organismsDiffer>
    <experiments>3</experiments>
</comment>
<comment type="interaction">
    <interactant intactId="EBI-10172526">
        <id>Q9UJV3-2</id>
    </interactant>
    <interactant intactId="EBI-744099">
        <id>Q9H0I2</id>
        <label>ENKD1</label>
    </interactant>
    <organismsDiffer>false</organismsDiffer>
    <experiments>3</experiments>
</comment>
<comment type="interaction">
    <interactant intactId="EBI-10172526">
        <id>Q9UJV3-2</id>
    </interactant>
    <interactant intactId="EBI-12135243">
        <id>O95208-2</id>
        <label>EPN2</label>
    </interactant>
    <organismsDiffer>false</organismsDiffer>
    <experiments>3</experiments>
</comment>
<comment type="interaction">
    <interactant intactId="EBI-10172526">
        <id>Q9UJV3-2</id>
    </interactant>
    <interactant intactId="EBI-751864">
        <id>Q9NVF9</id>
        <label>ETNK2</label>
    </interactant>
    <organismsDiffer>false</organismsDiffer>
    <experiments>3</experiments>
</comment>
<comment type="interaction">
    <interactant intactId="EBI-10172526">
        <id>Q9UJV3-2</id>
    </interactant>
    <interactant intactId="EBI-10192902">
        <id>O95990-3</id>
        <label>FAM107A</label>
    </interactant>
    <organismsDiffer>false</organismsDiffer>
    <experiments>3</experiments>
</comment>
<comment type="interaction">
    <interactant intactId="EBI-10172526">
        <id>Q9UJV3-2</id>
    </interactant>
    <interactant intactId="EBI-719941">
        <id>Q3B820</id>
        <label>FAM161A</label>
    </interactant>
    <organismsDiffer>false</organismsDiffer>
    <experiments>6</experiments>
</comment>
<comment type="interaction">
    <interactant intactId="EBI-10172526">
        <id>Q9UJV3-2</id>
    </interactant>
    <interactant intactId="EBI-7225287">
        <id>Q96MY7</id>
        <label>FAM161B</label>
    </interactant>
    <organismsDiffer>false</organismsDiffer>
    <experiments>3</experiments>
</comment>
<comment type="interaction">
    <interactant intactId="EBI-10172526">
        <id>Q9UJV3-2</id>
    </interactant>
    <interactant intactId="EBI-742802">
        <id>Q9Y247</id>
        <label>FAM50B</label>
    </interactant>
    <organismsDiffer>false</organismsDiffer>
    <experiments>3</experiments>
</comment>
<comment type="interaction">
    <interactant intactId="EBI-10172526">
        <id>Q9UJV3-2</id>
    </interactant>
    <interactant intactId="EBI-6658203">
        <id>Q86YD7</id>
        <label>FAM90A1</label>
    </interactant>
    <organismsDiffer>false</organismsDiffer>
    <experiments>6</experiments>
</comment>
<comment type="interaction">
    <interactant intactId="EBI-10172526">
        <id>Q9UJV3-2</id>
    </interactant>
    <interactant intactId="EBI-2513774">
        <id>O95363</id>
        <label>FARS2</label>
    </interactant>
    <organismsDiffer>false</organismsDiffer>
    <experiments>6</experiments>
</comment>
<comment type="interaction">
    <interactant intactId="EBI-10172526">
        <id>Q9UJV3-2</id>
    </interactant>
    <interactant intactId="EBI-747570">
        <id>Q7L8L6</id>
        <label>FASTKD5</label>
    </interactant>
    <organismsDiffer>false</organismsDiffer>
    <experiments>3</experiments>
</comment>
<comment type="interaction">
    <interactant intactId="EBI-10172526">
        <id>Q9UJV3-2</id>
    </interactant>
    <interactant intactId="EBI-10244131">
        <id>Q8TES7-6</id>
        <label>FBF1</label>
    </interactant>
    <organismsDiffer>false</organismsDiffer>
    <experiments>3</experiments>
</comment>
<comment type="interaction">
    <interactant intactId="EBI-10172526">
        <id>Q9UJV3-2</id>
    </interactant>
    <interactant intactId="EBI-744419">
        <id>Q96D16</id>
        <label>FBXL18</label>
    </interactant>
    <organismsDiffer>false</organismsDiffer>
    <experiments>3</experiments>
</comment>
<comment type="interaction">
    <interactant intactId="EBI-10172526">
        <id>Q9UJV3-2</id>
    </interactant>
    <interactant intactId="EBI-741068">
        <id>Q969U6</id>
        <label>FBXW5</label>
    </interactant>
    <organismsDiffer>false</organismsDiffer>
    <experiments>3</experiments>
</comment>
<comment type="interaction">
    <interactant intactId="EBI-10172526">
        <id>Q9UJV3-2</id>
    </interactant>
    <interactant intactId="EBI-10172181">
        <id>Q53SE7</id>
        <label>FLJ13057</label>
    </interactant>
    <organismsDiffer>false</organismsDiffer>
    <experiments>3</experiments>
</comment>
<comment type="interaction">
    <interactant intactId="EBI-10172526">
        <id>Q9UJV3-2</id>
    </interactant>
    <interactant intactId="EBI-11961494">
        <id>Q6VB84</id>
        <label>FOXD4L3</label>
    </interactant>
    <organismsDiffer>false</organismsDiffer>
    <experiments>3</experiments>
</comment>
<comment type="interaction">
    <interactant intactId="EBI-10172526">
        <id>Q9UJV3-2</id>
    </interactant>
    <interactant intactId="EBI-741729">
        <id>Q96NE9</id>
        <label>FRMD6</label>
    </interactant>
    <organismsDiffer>false</organismsDiffer>
    <experiments>3</experiments>
</comment>
<comment type="interaction">
    <interactant intactId="EBI-10172526">
        <id>Q9UJV3-2</id>
    </interactant>
    <interactant intactId="EBI-5661036">
        <id>A1L4K1</id>
        <label>FSD2</label>
    </interactant>
    <organismsDiffer>false</organismsDiffer>
    <experiments>3</experiments>
</comment>
<comment type="interaction">
    <interactant intactId="EBI-10172526">
        <id>Q9UJV3-2</id>
    </interactant>
    <interactant intactId="EBI-7960826">
        <id>Q8NHY3</id>
        <label>GAS2L2</label>
    </interactant>
    <organismsDiffer>false</organismsDiffer>
    <experiments>3</experiments>
</comment>
<comment type="interaction">
    <interactant intactId="EBI-10172526">
        <id>Q9UJV3-2</id>
    </interactant>
    <interactant intactId="EBI-1052570">
        <id>O95995</id>
        <label>GAS8</label>
    </interactant>
    <organismsDiffer>false</organismsDiffer>
    <experiments>3</experiments>
</comment>
<comment type="interaction">
    <interactant intactId="EBI-10172526">
        <id>Q9UJV3-2</id>
    </interactant>
    <interactant intactId="EBI-746252">
        <id>Q96CN9</id>
        <label>GCC1</label>
    </interactant>
    <organismsDiffer>false</organismsDiffer>
    <experiments>3</experiments>
</comment>
<comment type="interaction">
    <interactant intactId="EBI-10172526">
        <id>Q9UJV3-2</id>
    </interactant>
    <interactant intactId="EBI-744104">
        <id>P55040</id>
        <label>GEM</label>
    </interactant>
    <organismsDiffer>false</organismsDiffer>
    <experiments>4</experiments>
</comment>
<comment type="interaction">
    <interactant intactId="EBI-10172526">
        <id>Q9UJV3-2</id>
    </interactant>
    <interactant intactId="EBI-2548508">
        <id>Q96IK5</id>
        <label>GMCL1</label>
    </interactant>
    <organismsDiffer>false</organismsDiffer>
    <experiments>5</experiments>
</comment>
<comment type="interaction">
    <interactant intactId="EBI-10172526">
        <id>Q9UJV3-2</id>
    </interactant>
    <interactant intactId="EBI-618309">
        <id>Q08379</id>
        <label>GOLGA2</label>
    </interactant>
    <organismsDiffer>false</organismsDiffer>
    <experiments>3</experiments>
</comment>
<comment type="interaction">
    <interactant intactId="EBI-10172526">
        <id>Q9UJV3-2</id>
    </interactant>
    <interactant intactId="EBI-4403685">
        <id>Q7Z5G4</id>
        <label>GOLGA7</label>
    </interactant>
    <organismsDiffer>false</organismsDiffer>
    <experiments>3</experiments>
</comment>
<comment type="interaction">
    <interactant intactId="EBI-10172526">
        <id>Q9UJV3-2</id>
    </interactant>
    <interactant intactId="EBI-739467">
        <id>Q9H8Y8</id>
        <label>GORASP2</label>
    </interactant>
    <organismsDiffer>false</organismsDiffer>
    <experiments>6</experiments>
</comment>
<comment type="interaction">
    <interactant intactId="EBI-10172526">
        <id>Q9UJV3-2</id>
    </interactant>
    <interactant intactId="EBI-751540">
        <id>O95872</id>
        <label>GPANK1</label>
    </interactant>
    <organismsDiffer>false</organismsDiffer>
    <experiments>3</experiments>
</comment>
<comment type="interaction">
    <interactant intactId="EBI-10172526">
        <id>Q9UJV3-2</id>
    </interactant>
    <interactant intactId="EBI-746309">
        <id>Q92917</id>
        <label>GPKOW</label>
    </interactant>
    <organismsDiffer>false</organismsDiffer>
    <experiments>3</experiments>
</comment>
<comment type="interaction">
    <interactant intactId="EBI-10172526">
        <id>Q9UJV3-2</id>
    </interactant>
    <interactant intactId="EBI-19954058">
        <id>O15499</id>
        <label>GSC2</label>
    </interactant>
    <organismsDiffer>false</organismsDiffer>
    <experiments>3</experiments>
</comment>
<comment type="interaction">
    <interactant intactId="EBI-10172526">
        <id>Q9UJV3-2</id>
    </interactant>
    <interactant intactId="EBI-11956675">
        <id>Q9GZV7</id>
        <label>HAPLN2</label>
    </interactant>
    <organismsDiffer>false</organismsDiffer>
    <experiments>3</experiments>
</comment>
<comment type="interaction">
    <interactant intactId="EBI-10172526">
        <id>Q9UJV3-2</id>
    </interactant>
    <interactant intactId="EBI-9834454">
        <id>P08631-2</id>
        <label>HCK</label>
    </interactant>
    <organismsDiffer>false</organismsDiffer>
    <experiments>3</experiments>
</comment>
<comment type="interaction">
    <interactant intactId="EBI-10172526">
        <id>Q9UJV3-2</id>
    </interactant>
    <interactant intactId="EBI-11953488">
        <id>P56524-2</id>
        <label>HDAC4</label>
    </interactant>
    <organismsDiffer>false</organismsDiffer>
    <experiments>3</experiments>
</comment>
<comment type="interaction">
    <interactant intactId="EBI-10172526">
        <id>Q9UJV3-2</id>
    </interactant>
    <interactant intactId="EBI-1052734">
        <id>Q7Z353</id>
        <label>HDX</label>
    </interactant>
    <organismsDiffer>false</organismsDiffer>
    <experiments>3</experiments>
</comment>
<comment type="interaction">
    <interactant intactId="EBI-10172526">
        <id>Q9UJV3-2</id>
    </interactant>
    <interactant intactId="EBI-5329558">
        <id>P14652</id>
        <label>HOXB2</label>
    </interactant>
    <organismsDiffer>false</organismsDiffer>
    <experiments>3</experiments>
</comment>
<comment type="interaction">
    <interactant intactId="EBI-10172526">
        <id>Q9UJV3-2</id>
    </interactant>
    <interactant intactId="EBI-3893317">
        <id>P09067</id>
        <label>HOXB5</label>
    </interactant>
    <organismsDiffer>false</organismsDiffer>
    <experiments>3</experiments>
</comment>
<comment type="interaction">
    <interactant intactId="EBI-10172526">
        <id>Q9UJV3-2</id>
    </interactant>
    <interactant intactId="EBI-745290">
        <id>P17482</id>
        <label>HOXB9</label>
    </interactant>
    <organismsDiffer>false</organismsDiffer>
    <experiments>6</experiments>
</comment>
<comment type="interaction">
    <interactant intactId="EBI-10172526">
        <id>Q9UJV3-2</id>
    </interactant>
    <interactant intactId="EBI-11955401">
        <id>Q86VF2-5</id>
        <label>IGFN1</label>
    </interactant>
    <organismsDiffer>false</organismsDiffer>
    <experiments>3</experiments>
</comment>
<comment type="interaction">
    <interactant intactId="EBI-10172526">
        <id>Q9UJV3-2</id>
    </interactant>
    <interactant intactId="EBI-8638439">
        <id>Q8IYA8</id>
        <label>IHO1</label>
    </interactant>
    <organismsDiffer>false</organismsDiffer>
    <experiments>3</experiments>
</comment>
<comment type="interaction">
    <interactant intactId="EBI-10172526">
        <id>Q9UJV3-2</id>
    </interactant>
    <interactant intactId="EBI-747204">
        <id>Q9UKT9</id>
        <label>IKZF3</label>
    </interactant>
    <organismsDiffer>false</organismsDiffer>
    <experiments>5</experiments>
</comment>
<comment type="interaction">
    <interactant intactId="EBI-10172526">
        <id>Q9UJV3-2</id>
    </interactant>
    <interactant intactId="EBI-17178971">
        <id>Q14005-2</id>
        <label>IL16</label>
    </interactant>
    <organismsDiffer>false</organismsDiffer>
    <experiments>6</experiments>
</comment>
<comment type="interaction">
    <interactant intactId="EBI-10172526">
        <id>Q9UJV3-2</id>
    </interactant>
    <interactant intactId="EBI-715611">
        <id>Q9C086</id>
        <label>INO80B</label>
    </interactant>
    <organismsDiffer>false</organismsDiffer>
    <experiments>3</experiments>
</comment>
<comment type="interaction">
    <interactant intactId="EBI-10172526">
        <id>Q9UJV3-2</id>
    </interactant>
    <interactant intactId="EBI-745878">
        <id>Q9H0B3</id>
        <label>IQCN</label>
    </interactant>
    <organismsDiffer>false</organismsDiffer>
    <experiments>3</experiments>
</comment>
<comment type="interaction">
    <interactant intactId="EBI-10172526">
        <id>Q9UJV3-2</id>
    </interactant>
    <interactant intactId="EBI-1047335">
        <id>Q9H1K1</id>
        <label>ISCU</label>
    </interactant>
    <organismsDiffer>false</organismsDiffer>
    <experiments>3</experiments>
</comment>
<comment type="interaction">
    <interactant intactId="EBI-10172526">
        <id>Q9UJV3-2</id>
    </interactant>
    <interactant intactId="EBI-11051601">
        <id>P16144-2</id>
        <label>ITGB4</label>
    </interactant>
    <organismsDiffer>false</organismsDiffer>
    <experiments>3</experiments>
</comment>
<comment type="interaction">
    <interactant intactId="EBI-10172526">
        <id>Q9UJV3-2</id>
    </interactant>
    <interactant intactId="EBI-2510602">
        <id>Q15040</id>
        <label>JOSD1</label>
    </interactant>
    <organismsDiffer>false</organismsDiffer>
    <experiments>3</experiments>
</comment>
<comment type="interaction">
    <interactant intactId="EBI-10172526">
        <id>Q9UJV3-2</id>
    </interactant>
    <interactant intactId="EBI-2556193">
        <id>Q63ZY3</id>
        <label>KANK2</label>
    </interactant>
    <organismsDiffer>false</organismsDiffer>
    <experiments>3</experiments>
</comment>
<comment type="interaction">
    <interactant intactId="EBI-10172526">
        <id>Q9UJV3-2</id>
    </interactant>
    <interactant intactId="EBI-8472129">
        <id>Q9HAQ2</id>
        <label>KIF9</label>
    </interactant>
    <organismsDiffer>false</organismsDiffer>
    <experiments>3</experiments>
</comment>
<comment type="interaction">
    <interactant intactId="EBI-10172526">
        <id>Q9UJV3-2</id>
    </interactant>
    <interactant intactId="EBI-2125614">
        <id>Q9BVG8</id>
        <label>KIFC3</label>
    </interactant>
    <organismsDiffer>false</organismsDiffer>
    <experiments>3</experiments>
</comment>
<comment type="interaction">
    <interactant intactId="EBI-10172526">
        <id>Q9UJV3-2</id>
    </interactant>
    <interactant intactId="EBI-14069005">
        <id>Q9BVG8-5</id>
        <label>KIFC3</label>
    </interactant>
    <organismsDiffer>false</organismsDiffer>
    <experiments>3</experiments>
</comment>
<comment type="interaction">
    <interactant intactId="EBI-10172526">
        <id>Q9UJV3-2</id>
    </interactant>
    <interactant intactId="EBI-3044087">
        <id>Q7Z3Y8</id>
        <label>KRT27</label>
    </interactant>
    <organismsDiffer>false</organismsDiffer>
    <experiments>3</experiments>
</comment>
<comment type="interaction">
    <interactant intactId="EBI-10172526">
        <id>Q9UJV3-2</id>
    </interactant>
    <interactant intactId="EBI-948001">
        <id>Q15323</id>
        <label>KRT31</label>
    </interactant>
    <organismsDiffer>false</organismsDiffer>
    <experiments>3</experiments>
</comment>
<comment type="interaction">
    <interactant intactId="EBI-10172526">
        <id>Q9UJV3-2</id>
    </interactant>
    <interactant intactId="EBI-10171697">
        <id>Q6A162</id>
        <label>KRT40</label>
    </interactant>
    <organismsDiffer>false</organismsDiffer>
    <experiments>3</experiments>
</comment>
<comment type="interaction">
    <interactant intactId="EBI-10172526">
        <id>Q9UJV3-2</id>
    </interactant>
    <interactant intactId="EBI-2949715">
        <id>O95678</id>
        <label>KRT75</label>
    </interactant>
    <organismsDiffer>false</organismsDiffer>
    <experiments>3</experiments>
</comment>
<comment type="interaction">
    <interactant intactId="EBI-10172526">
        <id>Q9UJV3-2</id>
    </interactant>
    <interactant intactId="EBI-2952745">
        <id>Q01546</id>
        <label>KRT76</label>
    </interactant>
    <organismsDiffer>false</organismsDiffer>
    <experiments>3</experiments>
</comment>
<comment type="interaction">
    <interactant intactId="EBI-10172526">
        <id>Q9UJV3-2</id>
    </interactant>
    <interactant intactId="EBI-1052105">
        <id>Q14657</id>
        <label>LAGE3</label>
    </interactant>
    <organismsDiffer>false</organismsDiffer>
    <experiments>3</experiments>
</comment>
<comment type="interaction">
    <interactant intactId="EBI-10172526">
        <id>Q9UJV3-2</id>
    </interactant>
    <interactant intactId="EBI-726510">
        <id>Q96BZ8</id>
        <label>LENG1</label>
    </interactant>
    <organismsDiffer>false</organismsDiffer>
    <experiments>6</experiments>
</comment>
<comment type="interaction">
    <interactant intactId="EBI-10172526">
        <id>Q9UJV3-2</id>
    </interactant>
    <interactant intactId="EBI-10274069">
        <id>Q8TCE9</id>
        <label>LGALS14</label>
    </interactant>
    <organismsDiffer>false</organismsDiffer>
    <experiments>6</experiments>
</comment>
<comment type="interaction">
    <interactant intactId="EBI-10172526">
        <id>Q9UJV3-2</id>
    </interactant>
    <interactant intactId="EBI-740058">
        <id>O00214</id>
        <label>LGALS8</label>
    </interactant>
    <organismsDiffer>false</organismsDiffer>
    <experiments>3</experiments>
</comment>
<comment type="interaction">
    <interactant intactId="EBI-10172526">
        <id>Q9UJV3-2</id>
    </interactant>
    <interactant intactId="EBI-12069522">
        <id>O00214-2</id>
        <label>LGALS8</label>
    </interactant>
    <organismsDiffer>false</organismsDiffer>
    <experiments>3</experiments>
</comment>
<comment type="interaction">
    <interactant intactId="EBI-10172526">
        <id>Q9UJV3-2</id>
    </interactant>
    <interactant intactId="EBI-2830427">
        <id>Q03252</id>
        <label>LMNB2</label>
    </interactant>
    <organismsDiffer>false</organismsDiffer>
    <experiments>3</experiments>
</comment>
<comment type="interaction">
    <interactant intactId="EBI-10172526">
        <id>Q9UJV3-2</id>
    </interactant>
    <interactant intactId="EBI-12028858">
        <id>Q8IXW0</id>
        <label>LMNTD2</label>
    </interactant>
    <organismsDiffer>false</organismsDiffer>
    <experiments>3</experiments>
</comment>
<comment type="interaction">
    <interactant intactId="EBI-10172526">
        <id>Q9UJV3-2</id>
    </interactant>
    <interactant intactId="EBI-11742507">
        <id>Q8TAP4-4</id>
        <label>LMO3</label>
    </interactant>
    <organismsDiffer>false</organismsDiffer>
    <experiments>3</experiments>
</comment>
<comment type="interaction">
    <interactant intactId="EBI-10172526">
        <id>Q9UJV3-2</id>
    </interactant>
    <interactant intactId="EBI-2798728">
        <id>P61968</id>
        <label>LMO4</label>
    </interactant>
    <organismsDiffer>false</organismsDiffer>
    <experiments>3</experiments>
</comment>
<comment type="interaction">
    <interactant intactId="EBI-10172526">
        <id>Q9UJV3-2</id>
    </interactant>
    <interactant intactId="EBI-739832">
        <id>Q8TBB1</id>
        <label>LNX1</label>
    </interactant>
    <organismsDiffer>false</organismsDiffer>
    <experiments>6</experiments>
</comment>
<comment type="interaction">
    <interactant intactId="EBI-10172526">
        <id>Q9UJV3-2</id>
    </interactant>
    <interactant intactId="EBI-2341787">
        <id>Q17RB8</id>
        <label>LONRF1</label>
    </interactant>
    <organismsDiffer>false</organismsDiffer>
    <experiments>3</experiments>
</comment>
<comment type="interaction">
    <interactant intactId="EBI-10172526">
        <id>Q9UJV3-2</id>
    </interactant>
    <interactant intactId="EBI-2805176">
        <id>Q96CN5</id>
        <label>LRRC45</label>
    </interactant>
    <organismsDiffer>false</organismsDiffer>
    <experiments>3</experiments>
</comment>
<comment type="interaction">
    <interactant intactId="EBI-10172526">
        <id>Q9UJV3-2</id>
    </interactant>
    <interactant intactId="EBI-1216080">
        <id>Q9Y250</id>
        <label>LZTS1</label>
    </interactant>
    <organismsDiffer>false</organismsDiffer>
    <experiments>3</experiments>
</comment>
<comment type="interaction">
    <interactant intactId="EBI-10172526">
        <id>Q9UJV3-2</id>
    </interactant>
    <interactant intactId="EBI-741037">
        <id>Q9BRK4</id>
        <label>LZTS2</label>
    </interactant>
    <organismsDiffer>false</organismsDiffer>
    <experiments>3</experiments>
</comment>
<comment type="interaction">
    <interactant intactId="EBI-10172526">
        <id>Q9UJV3-2</id>
    </interactant>
    <interactant intactId="EBI-1045155">
        <id>P43360</id>
        <label>MAGEA6</label>
    </interactant>
    <organismsDiffer>false</organismsDiffer>
    <experiments>3</experiments>
</comment>
<comment type="interaction">
    <interactant intactId="EBI-10172526">
        <id>Q9UJV3-2</id>
    </interactant>
    <interactant intactId="EBI-746778">
        <id>Q96A72</id>
        <label>MAGOHB</label>
    </interactant>
    <organismsDiffer>false</organismsDiffer>
    <experiments>3</experiments>
</comment>
<comment type="interaction">
    <interactant intactId="EBI-10172526">
        <id>Q9UJV3-2</id>
    </interactant>
    <interactant intactId="EBI-2864512">
        <id>P50221</id>
        <label>MEOX1</label>
    </interactant>
    <organismsDiffer>false</organismsDiffer>
    <experiments>3</experiments>
</comment>
<comment type="interaction">
    <interactant intactId="EBI-10172526">
        <id>Q9UJV3-2</id>
    </interactant>
    <interactant intactId="EBI-16439278">
        <id>Q6FHY5</id>
        <label>MEOX2</label>
    </interactant>
    <organismsDiffer>false</organismsDiffer>
    <experiments>3</experiments>
</comment>
<comment type="interaction">
    <interactant intactId="EBI-10172526">
        <id>Q9UJV3-2</id>
    </interactant>
    <interactant intactId="EBI-749353">
        <id>Q9H7H0</id>
        <label>METTL17</label>
    </interactant>
    <organismsDiffer>false</organismsDiffer>
    <experiments>6</experiments>
</comment>
<comment type="interaction">
    <interactant intactId="EBI-10172526">
        <id>Q9UJV3-2</id>
    </interactant>
    <interactant intactId="EBI-11098807">
        <id>Q9H7H0-2</id>
        <label>METTL17</label>
    </interactant>
    <organismsDiffer>false</organismsDiffer>
    <experiments>3</experiments>
</comment>
<comment type="interaction">
    <interactant intactId="EBI-10172526">
        <id>Q9UJV3-2</id>
    </interactant>
    <interactant intactId="EBI-1048159">
        <id>P55081</id>
        <label>MFAP1</label>
    </interactant>
    <organismsDiffer>false</organismsDiffer>
    <experiments>6</experiments>
</comment>
<comment type="interaction">
    <interactant intactId="EBI-10172526">
        <id>Q9UJV3-2</id>
    </interactant>
    <interactant intactId="EBI-14086479">
        <id>Q8IVT4</id>
        <label>MGC50722</label>
    </interactant>
    <organismsDiffer>false</organismsDiffer>
    <experiments>3</experiments>
</comment>
<comment type="interaction">
    <interactant intactId="EBI-10172526">
        <id>Q9UJV3-2</id>
    </interactant>
    <interactant intactId="EBI-2340316">
        <id>O15344</id>
        <label>MID1</label>
    </interactant>
    <organismsDiffer>false</organismsDiffer>
    <experiments>9</experiments>
</comment>
<comment type="interaction">
    <interactant intactId="EBI-10172526">
        <id>Q9UJV3-2</id>
    </interactant>
    <interactant intactId="EBI-750096">
        <id>Q9NPA3</id>
        <label>MID1IP1</label>
    </interactant>
    <organismsDiffer>false</organismsDiffer>
    <experiments>3</experiments>
</comment>
<comment type="interaction">
    <interactant intactId="EBI-10172526">
        <id>Q9UJV3-2</id>
    </interactant>
    <interactant intactId="EBI-10172526">
        <id>Q9UJV3-2</id>
        <label>MID2</label>
    </interactant>
    <organismsDiffer>false</organismsDiffer>
    <experiments>4</experiments>
</comment>
<comment type="interaction">
    <interactant intactId="EBI-10172526">
        <id>Q9UJV3-2</id>
    </interactant>
    <interactant intactId="EBI-742459">
        <id>Q9BU76</id>
        <label>MMTAG2</label>
    </interactant>
    <organismsDiffer>false</organismsDiffer>
    <experiments>3</experiments>
</comment>
<comment type="interaction">
    <interactant intactId="EBI-10172526">
        <id>Q9UJV3-2</id>
    </interactant>
    <interactant intactId="EBI-1757866">
        <id>P00540</id>
        <label>MOS</label>
    </interactant>
    <organismsDiffer>false</organismsDiffer>
    <experiments>3</experiments>
</comment>
<comment type="interaction">
    <interactant intactId="EBI-10172526">
        <id>Q9UJV3-2</id>
    </interactant>
    <interactant intactId="EBI-12054609">
        <id>Q13772-3</id>
        <label>NCOA4</label>
    </interactant>
    <organismsDiffer>false</organismsDiffer>
    <experiments>3</experiments>
</comment>
<comment type="interaction">
    <interactant intactId="EBI-10172526">
        <id>Q9UJV3-2</id>
    </interactant>
    <interactant intactId="EBI-10250949">
        <id>Q6NSM0</id>
        <label>NR1D2</label>
    </interactant>
    <organismsDiffer>false</organismsDiffer>
    <experiments>3</experiments>
</comment>
<comment type="interaction">
    <interactant intactId="EBI-10172526">
        <id>Q9UJV3-2</id>
    </interactant>
    <interactant intactId="EBI-12028784">
        <id>Q6X4W1-2</id>
        <label>NSMF</label>
    </interactant>
    <organismsDiffer>false</organismsDiffer>
    <experiments>3</experiments>
</comment>
<comment type="interaction">
    <interactant intactId="EBI-10172526">
        <id>Q9UJV3-2</id>
    </interactant>
    <interactant intactId="EBI-398874">
        <id>Q9UBU9</id>
        <label>NXF1</label>
    </interactant>
    <organismsDiffer>false</organismsDiffer>
    <experiments>3</experiments>
</comment>
<comment type="interaction">
    <interactant intactId="EBI-10172526">
        <id>Q9UJV3-2</id>
    </interactant>
    <interactant intactId="EBI-746259">
        <id>Q96DC9</id>
        <label>OTUB2</label>
    </interactant>
    <organismsDiffer>false</organismsDiffer>
    <experiments>3</experiments>
</comment>
<comment type="interaction">
    <interactant intactId="EBI-10172526">
        <id>Q9UJV3-2</id>
    </interactant>
    <interactant intactId="EBI-79165">
        <id>Q9NRD5</id>
        <label>PICK1</label>
    </interactant>
    <organismsDiffer>false</organismsDiffer>
    <experiments>3</experiments>
</comment>
<comment type="interaction">
    <interactant intactId="EBI-10172526">
        <id>Q9UJV3-2</id>
    </interactant>
    <interactant intactId="EBI-602382">
        <id>Q16512</id>
        <label>PKN1</label>
    </interactant>
    <organismsDiffer>false</organismsDiffer>
    <experiments>3</experiments>
</comment>
<comment type="interaction">
    <interactant intactId="EBI-10172526">
        <id>Q9UJV3-2</id>
    </interactant>
    <interactant intactId="EBI-10276663">
        <id>Q8WUT1</id>
        <label>POLDIP3</label>
    </interactant>
    <organismsDiffer>false</organismsDiffer>
    <experiments>3</experiments>
</comment>
<comment type="interaction">
    <interactant intactId="EBI-10172526">
        <id>Q9UJV3-2</id>
    </interactant>
    <interactant intactId="EBI-2557469">
        <id>Q6NYC8</id>
        <label>PPP1R18</label>
    </interactant>
    <organismsDiffer>false</organismsDiffer>
    <experiments>6</experiments>
</comment>
<comment type="interaction">
    <interactant intactId="EBI-10172526">
        <id>Q9UJV3-2</id>
    </interactant>
    <interactant intactId="EBI-744322">
        <id>O43395</id>
        <label>PRPF3</label>
    </interactant>
    <organismsDiffer>false</organismsDiffer>
    <experiments>3</experiments>
</comment>
<comment type="interaction">
    <interactant intactId="EBI-10172526">
        <id>Q9UJV3-2</id>
    </interactant>
    <interactant intactId="EBI-1567797">
        <id>Q8WWY3</id>
        <label>PRPF31</label>
    </interactant>
    <organismsDiffer>false</organismsDiffer>
    <experiments>11</experiments>
</comment>
<comment type="interaction">
    <interactant intactId="EBI-10172526">
        <id>Q9UJV3-2</id>
    </interactant>
    <interactant intactId="EBI-359352">
        <id>P25786</id>
        <label>PSMA1</label>
    </interactant>
    <organismsDiffer>false</organismsDiffer>
    <experiments>6</experiments>
</comment>
<comment type="interaction">
    <interactant intactId="EBI-10172526">
        <id>Q9UJV3-2</id>
    </interactant>
    <interactant intactId="EBI-12154567">
        <id>Q8WV60</id>
        <label>PTCD2</label>
    </interactant>
    <organismsDiffer>false</organismsDiffer>
    <experiments>3</experiments>
</comment>
<comment type="interaction">
    <interactant intactId="EBI-10172526">
        <id>Q9UJV3-2</id>
    </interactant>
    <interactant intactId="EBI-11603375">
        <id>A2A3K4</id>
        <label>PTPDC1</label>
    </interactant>
    <organismsDiffer>false</organismsDiffer>
    <experiments>3</experiments>
</comment>
<comment type="interaction">
    <interactant intactId="EBI-10172526">
        <id>Q9UJV3-2</id>
    </interactant>
    <interactant intactId="EBI-347462">
        <id>P47897</id>
        <label>QARS1</label>
    </interactant>
    <organismsDiffer>false</organismsDiffer>
    <experiments>3</experiments>
</comment>
<comment type="interaction">
    <interactant intactId="EBI-10172526">
        <id>Q9UJV3-2</id>
    </interactant>
    <interactant intactId="EBI-14093916">
        <id>Q9UJ41-4</id>
        <label>RABGEF1</label>
    </interactant>
    <organismsDiffer>false</organismsDiffer>
    <experiments>3</experiments>
</comment>
<comment type="interaction">
    <interactant intactId="EBI-10172526">
        <id>Q9UJV3-2</id>
    </interactant>
    <interactant intactId="EBI-12028066">
        <id>Q86VV4</id>
        <label>RANBP3L</label>
    </interactant>
    <organismsDiffer>false</organismsDiffer>
    <experiments>3</experiments>
</comment>
<comment type="interaction">
    <interactant intactId="EBI-10172526">
        <id>Q9UJV3-2</id>
    </interactant>
    <interactant intactId="EBI-743428">
        <id>Q9P2K3</id>
        <label>RCOR3</label>
    </interactant>
    <organismsDiffer>false</organismsDiffer>
    <experiments>3</experiments>
</comment>
<comment type="interaction">
    <interactant intactId="EBI-10172526">
        <id>Q9UJV3-2</id>
    </interactant>
    <interactant intactId="EBI-1504830">
        <id>Q9P2K3-2</id>
        <label>RCOR3</label>
    </interactant>
    <organismsDiffer>false</organismsDiffer>
    <experiments>3</experiments>
</comment>
<comment type="interaction">
    <interactant intactId="EBI-10172526">
        <id>Q9UJV3-2</id>
    </interactant>
    <interactant intactId="EBI-10829018">
        <id>Q04864-2</id>
        <label>REL</label>
    </interactant>
    <organismsDiffer>false</organismsDiffer>
    <experiments>3</experiments>
</comment>
<comment type="interaction">
    <interactant intactId="EBI-10172526">
        <id>Q9UJV3-2</id>
    </interactant>
    <interactant intactId="EBI-12071382">
        <id>P04808</id>
        <label>RLN1</label>
    </interactant>
    <organismsDiffer>false</organismsDiffer>
    <experiments>3</experiments>
</comment>
<comment type="interaction">
    <interactant intactId="EBI-10172526">
        <id>Q9UJV3-2</id>
    </interactant>
    <interactant intactId="EBI-16428950">
        <id>A0A0S2Z4G9</id>
        <label>RNF6</label>
    </interactant>
    <organismsDiffer>false</organismsDiffer>
    <experiments>3</experiments>
</comment>
<comment type="interaction">
    <interactant intactId="EBI-10172526">
        <id>Q9UJV3-2</id>
    </interactant>
    <interactant intactId="EBI-18560266">
        <id>Q92753-1</id>
        <label>RORB</label>
    </interactant>
    <organismsDiffer>false</organismsDiffer>
    <experiments>3</experiments>
</comment>
<comment type="interaction">
    <interactant intactId="EBI-10172526">
        <id>Q9UJV3-2</id>
    </interactant>
    <interactant intactId="EBI-2855824">
        <id>Q9UNE2</id>
        <label>RPH3AL</label>
    </interactant>
    <organismsDiffer>false</organismsDiffer>
    <experiments>3</experiments>
</comment>
<comment type="interaction">
    <interactant intactId="EBI-10172526">
        <id>Q9UJV3-2</id>
    </interactant>
    <interactant intactId="EBI-10189722">
        <id>Q8N5L8</id>
        <label>RPP25L</label>
    </interactant>
    <organismsDiffer>false</organismsDiffer>
    <experiments>3</experiments>
</comment>
<comment type="interaction">
    <interactant intactId="EBI-10172526">
        <id>Q9UJV3-2</id>
    </interactant>
    <interactant intactId="EBI-11984663">
        <id>Q06455-2</id>
        <label>RUNX1T1</label>
    </interactant>
    <organismsDiffer>false</organismsDiffer>
    <experiments>3</experiments>
</comment>
<comment type="interaction">
    <interactant intactId="EBI-10172526">
        <id>Q9UJV3-2</id>
    </interactant>
    <interactant intactId="EBI-10224192">
        <id>Q06455-4</id>
        <label>RUNX1T1</label>
    </interactant>
    <organismsDiffer>false</organismsDiffer>
    <experiments>3</experiments>
</comment>
<comment type="interaction">
    <interactant intactId="EBI-10172526">
        <id>Q9UJV3-2</id>
    </interactant>
    <interactant intactId="EBI-16429492">
        <id>P28702-3</id>
        <label>RXRB</label>
    </interactant>
    <organismsDiffer>false</organismsDiffer>
    <experiments>3</experiments>
</comment>
<comment type="interaction">
    <interactant intactId="EBI-10172526">
        <id>Q9UJV3-2</id>
    </interactant>
    <interactant intactId="EBI-748391">
        <id>Q9BWG6</id>
        <label>SCNM1</label>
    </interactant>
    <organismsDiffer>false</organismsDiffer>
    <experiments>3</experiments>
</comment>
<comment type="interaction">
    <interactant intactId="EBI-10172526">
        <id>Q9UJV3-2</id>
    </interactant>
    <interactant intactId="EBI-727004">
        <id>O00560</id>
        <label>SDCBP</label>
    </interactant>
    <organismsDiffer>false</organismsDiffer>
    <experiments>3</experiments>
</comment>
<comment type="interaction">
    <interactant intactId="EBI-10172526">
        <id>Q9UJV3-2</id>
    </interactant>
    <interactant intactId="EBI-693002">
        <id>Q8WYJ6</id>
        <label>SEPTIN1</label>
    </interactant>
    <organismsDiffer>false</organismsDiffer>
    <experiments>3</experiments>
</comment>
<comment type="interaction">
    <interactant intactId="EBI-10172526">
        <id>Q9UJV3-2</id>
    </interactant>
    <interactant intactId="EBI-10313866">
        <id>Q9NUL5</id>
        <label>SHFL</label>
    </interactant>
    <organismsDiffer>false</organismsDiffer>
    <experiments>3</experiments>
</comment>
<comment type="interaction">
    <interactant intactId="EBI-10172526">
        <id>Q9UJV3-2</id>
    </interactant>
    <interactant intactId="EBI-10255185">
        <id>Q6ZT89</id>
        <label>SLC25A48</label>
    </interactant>
    <organismsDiffer>false</organismsDiffer>
    <experiments>3</experiments>
</comment>
<comment type="interaction">
    <interactant intactId="EBI-10172526">
        <id>Q9UJV3-2</id>
    </interactant>
    <interactant intactId="EBI-12065614">
        <id>Q6ZT89-3</id>
        <label>SLC25A48</label>
    </interactant>
    <organismsDiffer>false</organismsDiffer>
    <experiments>3</experiments>
</comment>
<comment type="interaction">
    <interactant intactId="EBI-10172526">
        <id>Q9UJV3-2</id>
    </interactant>
    <interactant intactId="EBI-356254">
        <id>P12236</id>
        <label>SLC25A6</label>
    </interactant>
    <organismsDiffer>false</organismsDiffer>
    <experiments>3</experiments>
</comment>
<comment type="interaction">
    <interactant intactId="EBI-10172526">
        <id>Q9UJV3-2</id>
    </interactant>
    <interactant intactId="EBI-1045459">
        <id>O95863</id>
        <label>SNAI1</label>
    </interactant>
    <organismsDiffer>false</organismsDiffer>
    <experiments>3</experiments>
</comment>
<comment type="interaction">
    <interactant intactId="EBI-10172526">
        <id>Q9UJV3-2</id>
    </interactant>
    <interactant intactId="EBI-10244848">
        <id>Q5SQN1</id>
        <label>SNAP47</label>
    </interactant>
    <organismsDiffer>false</organismsDiffer>
    <experiments>3</experiments>
</comment>
<comment type="interaction">
    <interactant intactId="EBI-10172526">
        <id>Q9UJV3-2</id>
    </interactant>
    <interactant intactId="EBI-3916986">
        <id>Q86W54</id>
        <label>SPATA24</label>
    </interactant>
    <organismsDiffer>false</organismsDiffer>
    <experiments>3</experiments>
</comment>
<comment type="interaction">
    <interactant intactId="EBI-10172526">
        <id>Q9UJV3-2</id>
    </interactant>
    <interactant intactId="EBI-742688">
        <id>Q9NZD8</id>
        <label>SPG21</label>
    </interactant>
    <organismsDiffer>false</organismsDiffer>
    <experiments>6</experiments>
</comment>
<comment type="interaction">
    <interactant intactId="EBI-10172526">
        <id>Q9UJV3-2</id>
    </interactant>
    <interactant intactId="EBI-742487">
        <id>O43597</id>
        <label>SPRY2</label>
    </interactant>
    <organismsDiffer>false</organismsDiffer>
    <experiments>3</experiments>
</comment>
<comment type="interaction">
    <interactant intactId="EBI-10172526">
        <id>Q9UJV3-2</id>
    </interactant>
    <interactant intactId="EBI-714135">
        <id>O75558</id>
        <label>STX11</label>
    </interactant>
    <organismsDiffer>false</organismsDiffer>
    <experiments>3</experiments>
</comment>
<comment type="interaction">
    <interactant intactId="EBI-10172526">
        <id>Q9UJV3-2</id>
    </interactant>
    <interactant intactId="EBI-2682386">
        <id>Q96PV0</id>
        <label>SYNGAP1</label>
    </interactant>
    <organismsDiffer>false</organismsDiffer>
    <experiments>3</experiments>
</comment>
<comment type="interaction">
    <interactant intactId="EBI-10172526">
        <id>Q9UJV3-2</id>
    </interactant>
    <interactant intactId="EBI-745392">
        <id>Q9BSW7</id>
        <label>SYT17</label>
    </interactant>
    <organismsDiffer>false</organismsDiffer>
    <experiments>10</experiments>
</comment>
<comment type="interaction">
    <interactant intactId="EBI-10172526">
        <id>Q9UJV3-2</id>
    </interactant>
    <interactant intactId="EBI-745958">
        <id>Q5VWN6</id>
        <label>TASOR2</label>
    </interactant>
    <organismsDiffer>false</organismsDiffer>
    <experiments>3</experiments>
</comment>
<comment type="interaction">
    <interactant intactId="EBI-10172526">
        <id>Q9UJV3-2</id>
    </interactant>
    <interactant intactId="EBI-8787464">
        <id>Q9NU19</id>
        <label>TBC1D22B</label>
    </interactant>
    <organismsDiffer>false</organismsDiffer>
    <experiments>3</experiments>
</comment>
<comment type="interaction">
    <interactant intactId="EBI-10172526">
        <id>Q9UJV3-2</id>
    </interactant>
    <interactant intactId="EBI-11974855">
        <id>Q9Y4C2-2</id>
        <label>TCAF1</label>
    </interactant>
    <organismsDiffer>false</organismsDiffer>
    <experiments>3</experiments>
</comment>
<comment type="interaction">
    <interactant intactId="EBI-10172526">
        <id>Q9UJV3-2</id>
    </interactant>
    <interactant intactId="EBI-710310">
        <id>Q15560</id>
        <label>TCEA2</label>
    </interactant>
    <organismsDiffer>false</organismsDiffer>
    <experiments>3</experiments>
</comment>
<comment type="interaction">
    <interactant intactId="EBI-10172526">
        <id>Q9UJV3-2</id>
    </interactant>
    <interactant intactId="EBI-11955057">
        <id>Q8N8B7-2</id>
        <label>TCEANC</label>
    </interactant>
    <organismsDiffer>false</organismsDiffer>
    <experiments>3</experiments>
</comment>
<comment type="interaction">
    <interactant intactId="EBI-10172526">
        <id>Q9UJV3-2</id>
    </interactant>
    <interactant intactId="EBI-10180409">
        <id>Q969V4</id>
        <label>TEKT1</label>
    </interactant>
    <organismsDiffer>false</organismsDiffer>
    <experiments>3</experiments>
</comment>
<comment type="interaction">
    <interactant intactId="EBI-10172526">
        <id>Q9UJV3-2</id>
    </interactant>
    <interactant intactId="EBI-741350">
        <id>Q9BT49</id>
        <label>THAP7</label>
    </interactant>
    <organismsDiffer>false</organismsDiffer>
    <experiments>6</experiments>
</comment>
<comment type="interaction">
    <interactant intactId="EBI-10172526">
        <id>Q9UJV3-2</id>
    </interactant>
    <interactant intactId="EBI-373403">
        <id>O95985</id>
        <label>TOP3B</label>
    </interactant>
    <organismsDiffer>false</organismsDiffer>
    <experiments>6</experiments>
</comment>
<comment type="interaction">
    <interactant intactId="EBI-10172526">
        <id>Q9UJV3-2</id>
    </interactant>
    <interactant intactId="EBI-719493">
        <id>P14373</id>
        <label>TRIM27</label>
    </interactant>
    <organismsDiffer>false</organismsDiffer>
    <experiments>3</experiments>
</comment>
<comment type="interaction">
    <interactant intactId="EBI-10172526">
        <id>Q9UJV3-2</id>
    </interactant>
    <interactant intactId="EBI-725997">
        <id>Q8WV44</id>
        <label>TRIM41</label>
    </interactant>
    <organismsDiffer>false</organismsDiffer>
    <experiments>3</experiments>
</comment>
<comment type="interaction">
    <interactant intactId="EBI-10172526">
        <id>Q9UJV3-2</id>
    </interactant>
    <interactant intactId="EBI-5235829">
        <id>Q8IWZ5</id>
        <label>TRIM42</label>
    </interactant>
    <organismsDiffer>false</organismsDiffer>
    <experiments>3</experiments>
</comment>
<comment type="interaction">
    <interactant intactId="EBI-10172526">
        <id>Q9UJV3-2</id>
    </interactant>
    <interactant intactId="EBI-2130429">
        <id>Q9BYV2</id>
        <label>TRIM54</label>
    </interactant>
    <organismsDiffer>false</organismsDiffer>
    <experiments>6</experiments>
</comment>
<comment type="interaction">
    <interactant intactId="EBI-10172526">
        <id>Q9UJV3-2</id>
    </interactant>
    <interactant intactId="EBI-11525489">
        <id>Q86WT6-2</id>
        <label>TRIM69</label>
    </interactant>
    <organismsDiffer>false</organismsDiffer>
    <experiments>3</experiments>
</comment>
<comment type="interaction">
    <interactant intactId="EBI-10172526">
        <id>Q9UJV3-2</id>
    </interactant>
    <interactant intactId="EBI-744794">
        <id>Q9BZW7</id>
        <label>TSGA10</label>
    </interactant>
    <organismsDiffer>false</organismsDiffer>
    <experiments>3</experiments>
</comment>
<comment type="interaction">
    <interactant intactId="EBI-10172526">
        <id>Q9UJV3-2</id>
    </interactant>
    <interactant intactId="EBI-9090990">
        <id>Q5W5X9-3</id>
        <label>TTC23</label>
    </interactant>
    <organismsDiffer>false</organismsDiffer>
    <experiments>3</experiments>
</comment>
<comment type="interaction">
    <interactant intactId="EBI-10172526">
        <id>Q9UJV3-2</id>
    </interactant>
    <interactant intactId="EBI-743540">
        <id>P51668</id>
        <label>UBE2D1</label>
    </interactant>
    <organismsDiffer>false</organismsDiffer>
    <experiments>6</experiments>
</comment>
<comment type="interaction">
    <interactant intactId="EBI-10172526">
        <id>Q9UJV3-2</id>
    </interactant>
    <interactant intactId="EBI-347677">
        <id>P62837</id>
        <label>UBE2D2</label>
    </interactant>
    <organismsDiffer>false</organismsDiffer>
    <experiments>3</experiments>
</comment>
<comment type="interaction">
    <interactant intactId="EBI-10172526">
        <id>Q9UJV3-2</id>
    </interactant>
    <interactant intactId="EBI-348268">
        <id>P61077</id>
        <label>UBE2D3</label>
    </interactant>
    <organismsDiffer>false</organismsDiffer>
    <experiments>3</experiments>
</comment>
<comment type="interaction">
    <interactant intactId="EBI-10172526">
        <id>Q9UJV3-2</id>
    </interactant>
    <interactant intactId="EBI-745527">
        <id>Q9Y2X8</id>
        <label>UBE2D4</label>
    </interactant>
    <organismsDiffer>false</organismsDiffer>
    <experiments>6</experiments>
</comment>
<comment type="interaction">
    <interactant intactId="EBI-10172526">
        <id>Q9UJV3-2</id>
    </interactant>
    <interactant intactId="EBI-2129763">
        <id>Q96LR5</id>
        <label>UBE2E2</label>
    </interactant>
    <organismsDiffer>false</organismsDiffer>
    <experiments>6</experiments>
</comment>
<comment type="interaction">
    <interactant intactId="EBI-10172526">
        <id>Q9UJV3-2</id>
    </interactant>
    <interactant intactId="EBI-348496">
        <id>Q969T4</id>
        <label>UBE2E3</label>
    </interactant>
    <organismsDiffer>false</organismsDiffer>
    <experiments>3</experiments>
</comment>
<comment type="interaction">
    <interactant intactId="EBI-10172526">
        <id>Q9UJV3-2</id>
    </interactant>
    <interactant intactId="EBI-473850">
        <id>P61086</id>
        <label>UBE2K</label>
    </interactant>
    <organismsDiffer>false</organismsDiffer>
    <experiments>3</experiments>
</comment>
<comment type="interaction">
    <interactant intactId="EBI-10172526">
        <id>Q9UJV3-2</id>
    </interactant>
    <interactant intactId="EBI-745871">
        <id>Q9HAC8</id>
        <label>UBTD1</label>
    </interactant>
    <organismsDiffer>false</organismsDiffer>
    <experiments>3</experiments>
</comment>
<comment type="interaction">
    <interactant intactId="EBI-10172526">
        <id>Q9UJV3-2</id>
    </interactant>
    <interactant intactId="EBI-1048763">
        <id>Q9H3U1</id>
        <label>UNC45A</label>
    </interactant>
    <organismsDiffer>false</organismsDiffer>
    <experiments>3</experiments>
</comment>
<comment type="interaction">
    <interactant intactId="EBI-10172526">
        <id>Q9UJV3-2</id>
    </interactant>
    <interactant intactId="EBI-743272">
        <id>O75604</id>
        <label>USP2</label>
    </interactant>
    <organismsDiffer>false</organismsDiffer>
    <experiments>3</experiments>
</comment>
<comment type="interaction">
    <interactant intactId="EBI-10172526">
        <id>Q9UJV3-2</id>
    </interactant>
    <interactant intactId="EBI-2513462">
        <id>Q9UHP3</id>
        <label>USP25</label>
    </interactant>
    <organismsDiffer>false</organismsDiffer>
    <experiments>3</experiments>
</comment>
<comment type="interaction">
    <interactant intactId="EBI-10172526">
        <id>Q9UJV3-2</id>
    </interactant>
    <interactant intactId="EBI-11975223">
        <id>Q70EL1-9</id>
        <label>USP54</label>
    </interactant>
    <organismsDiffer>false</organismsDiffer>
    <experiments>3</experiments>
</comment>
<comment type="interaction">
    <interactant intactId="EBI-10172526">
        <id>Q9UJV3-2</id>
    </interactant>
    <interactant intactId="EBI-5457544">
        <id>Q9BRU9</id>
        <label>UTP23</label>
    </interactant>
    <organismsDiffer>false</organismsDiffer>
    <experiments>3</experiments>
</comment>
<comment type="interaction">
    <interactant intactId="EBI-10172526">
        <id>Q9UJV3-2</id>
    </interactant>
    <interactant intactId="EBI-747711">
        <id>Q68CQ4</id>
        <label>UTP25</label>
    </interactant>
    <organismsDiffer>false</organismsDiffer>
    <experiments>3</experiments>
</comment>
<comment type="interaction">
    <interactant intactId="EBI-10172526">
        <id>Q9UJV3-2</id>
    </interactant>
    <interactant intactId="EBI-10223946">
        <id>Q06250</id>
        <label>WT1-AS</label>
    </interactant>
    <organismsDiffer>false</organismsDiffer>
    <experiments>3</experiments>
</comment>
<comment type="interaction">
    <interactant intactId="EBI-10172526">
        <id>Q9UJV3-2</id>
    </interactant>
    <interactant intactId="EBI-711925">
        <id>Q05516</id>
        <label>ZBTB16</label>
    </interactant>
    <organismsDiffer>false</organismsDiffer>
    <experiments>3</experiments>
</comment>
<comment type="interaction">
    <interactant intactId="EBI-10172526">
        <id>Q9UJV3-2</id>
    </interactant>
    <interactant intactId="EBI-744471">
        <id>O43167</id>
        <label>ZBTB24</label>
    </interactant>
    <organismsDiffer>false</organismsDiffer>
    <experiments>6</experiments>
</comment>
<comment type="interaction">
    <interactant intactId="EBI-10172526">
        <id>Q9UJV3-2</id>
    </interactant>
    <interactant intactId="EBI-12287587">
        <id>B2RXF5</id>
        <label>ZBTB42</label>
    </interactant>
    <organismsDiffer>false</organismsDiffer>
    <experiments>3</experiments>
</comment>
<comment type="interaction">
    <interactant intactId="EBI-10172526">
        <id>Q9UJV3-2</id>
    </interactant>
    <interactant intactId="EBI-740767">
        <id>Q53FD0</id>
        <label>ZC2HC1C</label>
    </interactant>
    <organismsDiffer>false</organismsDiffer>
    <experiments>3</experiments>
</comment>
<comment type="interaction">
    <interactant intactId="EBI-10172526">
        <id>Q9UJV3-2</id>
    </interactant>
    <interactant intactId="EBI-750052">
        <id>Q9Y260</id>
        <label>ZFAB</label>
    </interactant>
    <organismsDiffer>false</organismsDiffer>
    <experiments>3</experiments>
</comment>
<comment type="interaction">
    <interactant intactId="EBI-10172526">
        <id>Q9UJV3-2</id>
    </interactant>
    <interactant intactId="EBI-2849569">
        <id>Q9BQ24</id>
        <label>ZFYVE21</label>
    </interactant>
    <organismsDiffer>false</organismsDiffer>
    <experiments>3</experiments>
</comment>
<comment type="interaction">
    <interactant intactId="EBI-10172526">
        <id>Q9UJV3-2</id>
    </interactant>
    <interactant intactId="EBI-16428984">
        <id>A0A0S2Z6H0</id>
        <label>ZGPAT</label>
    </interactant>
    <organismsDiffer>false</organismsDiffer>
    <experiments>3</experiments>
</comment>
<comment type="interaction">
    <interactant intactId="EBI-10172526">
        <id>Q9UJV3-2</id>
    </interactant>
    <interactant intactId="EBI-3439227">
        <id>Q8N5A5</id>
        <label>ZGPAT</label>
    </interactant>
    <organismsDiffer>false</organismsDiffer>
    <experiments>3</experiments>
</comment>
<comment type="interaction">
    <interactant intactId="EBI-10172526">
        <id>Q9UJV3-2</id>
    </interactant>
    <interactant intactId="EBI-10183064">
        <id>Q8N5A5-2</id>
        <label>ZGPAT</label>
    </interactant>
    <organismsDiffer>false</organismsDiffer>
    <experiments>9</experiments>
</comment>
<comment type="interaction">
    <interactant intactId="EBI-10172526">
        <id>Q9UJV3-2</id>
    </interactant>
    <interactant intactId="EBI-11962760">
        <id>Q9NZV7</id>
        <label>ZIM2</label>
    </interactant>
    <organismsDiffer>false</organismsDiffer>
    <experiments>3</experiments>
</comment>
<comment type="interaction">
    <interactant intactId="EBI-10172526">
        <id>Q9UJV3-2</id>
    </interactant>
    <interactant intactId="EBI-2555767">
        <id>Q15973</id>
        <label>ZNF124</label>
    </interactant>
    <organismsDiffer>false</organismsDiffer>
    <experiments>3</experiments>
</comment>
<comment type="interaction">
    <interactant intactId="EBI-10172526">
        <id>Q9UJV3-2</id>
    </interactant>
    <interactant intactId="EBI-741694">
        <id>P49910</id>
        <label>ZNF165</label>
    </interactant>
    <organismsDiffer>false</organismsDiffer>
    <experiments>3</experiments>
</comment>
<comment type="interaction">
    <interactant intactId="EBI-10172526">
        <id>Q9UJV3-2</id>
    </interactant>
    <interactant intactId="EBI-10186058">
        <id>Q53Z40</id>
        <label>ZNF165</label>
    </interactant>
    <organismsDiffer>false</organismsDiffer>
    <experiments>3</experiments>
</comment>
<comment type="interaction">
    <interactant intactId="EBI-10172526">
        <id>Q9UJV3-2</id>
    </interactant>
    <interactant intactId="EBI-12272076">
        <id>Q13360-2</id>
        <label>ZNF177</label>
    </interactant>
    <organismsDiffer>false</organismsDiffer>
    <experiments>3</experiments>
</comment>
<comment type="interaction">
    <interactant intactId="EBI-10172526">
        <id>Q9UJV3-2</id>
    </interactant>
    <interactant intactId="EBI-707773">
        <id>P17028</id>
        <label>ZNF24</label>
    </interactant>
    <organismsDiffer>false</organismsDiffer>
    <experiments>3</experiments>
</comment>
<comment type="interaction">
    <interactant intactId="EBI-10172526">
        <id>Q9UJV3-2</id>
    </interactant>
    <interactant intactId="EBI-10177272">
        <id>P15622-3</id>
        <label>ZNF250</label>
    </interactant>
    <organismsDiffer>false</organismsDiffer>
    <experiments>3</experiments>
</comment>
<comment type="interaction">
    <interactant intactId="EBI-10172526">
        <id>Q9UJV3-2</id>
    </interactant>
    <interactant intactId="EBI-7115319">
        <id>Q14584</id>
        <label>ZNF266</label>
    </interactant>
    <organismsDiffer>false</organismsDiffer>
    <experiments>3</experiments>
</comment>
<comment type="interaction">
    <interactant intactId="EBI-10172526">
        <id>Q9UJV3-2</id>
    </interactant>
    <interactant intactId="EBI-347633">
        <id>Q9H9D4</id>
        <label>ZNF408</label>
    </interactant>
    <organismsDiffer>false</organismsDiffer>
    <experiments>3</experiments>
</comment>
<comment type="interaction">
    <interactant intactId="EBI-10172526">
        <id>Q9UJV3-2</id>
    </interactant>
    <interactant intactId="EBI-11741890">
        <id>Q86VK4-3</id>
        <label>ZNF410</label>
    </interactant>
    <organismsDiffer>false</organismsDiffer>
    <experiments>3</experiments>
</comment>
<comment type="interaction">
    <interactant intactId="EBI-10172526">
        <id>Q9UJV3-2</id>
    </interactant>
    <interactant intactId="EBI-740727">
        <id>Q8TAU3</id>
        <label>ZNF417</label>
    </interactant>
    <organismsDiffer>false</organismsDiffer>
    <experiments>6</experiments>
</comment>
<comment type="interaction">
    <interactant intactId="EBI-10172526">
        <id>Q9UJV3-2</id>
    </interactant>
    <interactant intactId="EBI-11962468">
        <id>Q7Z4V0</id>
        <label>ZNF438</label>
    </interactant>
    <organismsDiffer>false</organismsDiffer>
    <experiments>6</experiments>
</comment>
<comment type="interaction">
    <interactant intactId="EBI-10172526">
        <id>Q9UJV3-2</id>
    </interactant>
    <interactant intactId="EBI-726439">
        <id>Q8IYI8</id>
        <label>ZNF440</label>
    </interactant>
    <organismsDiffer>false</organismsDiffer>
    <experiments>6</experiments>
</comment>
<comment type="interaction">
    <interactant intactId="EBI-10172526">
        <id>Q9UJV3-2</id>
    </interactant>
    <interactant intactId="EBI-10486136">
        <id>Q6ZNH5</id>
        <label>ZNF497</label>
    </interactant>
    <organismsDiffer>false</organismsDiffer>
    <experiments>3</experiments>
</comment>
<comment type="interaction">
    <interactant intactId="EBI-10172526">
        <id>Q9UJV3-2</id>
    </interactant>
    <interactant intactId="EBI-2555731">
        <id>Q9H707</id>
        <label>ZNF552</label>
    </interactant>
    <organismsDiffer>false</organismsDiffer>
    <experiments>3</experiments>
</comment>
<comment type="interaction">
    <interactant intactId="EBI-10172526">
        <id>Q9UJV3-2</id>
    </interactant>
    <interactant intactId="EBI-10273713">
        <id>Q8TBZ8</id>
        <label>ZNF564</label>
    </interactant>
    <organismsDiffer>false</organismsDiffer>
    <experiments>6</experiments>
</comment>
<comment type="interaction">
    <interactant intactId="EBI-10172526">
        <id>Q9UJV3-2</id>
    </interactant>
    <interactant intactId="EBI-6427977">
        <id>Q96SQ5</id>
        <label>ZNF587</label>
    </interactant>
    <organismsDiffer>false</organismsDiffer>
    <experiments>6</experiments>
</comment>
<comment type="interaction">
    <interactant intactId="EBI-10172526">
        <id>Q9UJV3-2</id>
    </interactant>
    <interactant intactId="EBI-11985915">
        <id>Q5T619</id>
        <label>ZNF648</label>
    </interactant>
    <organismsDiffer>false</organismsDiffer>
    <experiments>3</experiments>
</comment>
<comment type="interaction">
    <interactant intactId="EBI-10172526">
        <id>Q9UJV3-2</id>
    </interactant>
    <interactant intactId="EBI-12006574">
        <id>Q96BR6</id>
        <label>ZNF669</label>
    </interactant>
    <organismsDiffer>false</organismsDiffer>
    <experiments>3</experiments>
</comment>
<comment type="interaction">
    <interactant intactId="EBI-10172526">
        <id>Q9UJV3-2</id>
    </interactant>
    <interactant intactId="EBI-16429014">
        <id>A0A0S2Z5X4</id>
        <label>ZNF688</label>
    </interactant>
    <organismsDiffer>false</organismsDiffer>
    <experiments>3</experiments>
</comment>
<comment type="interaction">
    <interactant intactId="EBI-10172526">
        <id>Q9UJV3-2</id>
    </interactant>
    <interactant intactId="EBI-11090299">
        <id>Q9H7X3</id>
        <label>ZNF696</label>
    </interactant>
    <organismsDiffer>false</organismsDiffer>
    <experiments>3</experiments>
</comment>
<comment type="interaction">
    <interactant intactId="EBI-10172526">
        <id>Q9UJV3-2</id>
    </interactant>
    <interactant intactId="EBI-745775">
        <id>Q96H86</id>
        <label>ZNF764</label>
    </interactant>
    <organismsDiffer>false</organismsDiffer>
    <experiments>3</experiments>
</comment>
<comment type="interaction">
    <interactant intactId="EBI-10172526">
        <id>Q9UJV3-2</id>
    </interactant>
    <interactant intactId="EBI-10251462">
        <id>Q6NX45</id>
        <label>ZNF774</label>
    </interactant>
    <organismsDiffer>false</organismsDiffer>
    <experiments>3</experiments>
</comment>
<comment type="interaction">
    <interactant intactId="EBI-10172526">
        <id>Q9UJV3-2</id>
    </interactant>
    <interactant intactId="EBI-7138303">
        <id>Q8NCA9</id>
        <label>ZNF784</label>
    </interactant>
    <organismsDiffer>false</organismsDiffer>
    <experiments>3</experiments>
</comment>
<comment type="interaction">
    <interactant intactId="EBI-10172526">
        <id>Q9UJV3-2</id>
    </interactant>
    <interactant intactId="EBI-3925400">
        <id>A8K8V0</id>
        <label>ZNF785</label>
    </interactant>
    <organismsDiffer>false</organismsDiffer>
    <experiments>3</experiments>
</comment>
<comment type="interaction">
    <interactant intactId="EBI-10172526">
        <id>Q9UJV3-2</id>
    </interactant>
    <interactant intactId="EBI-10240849">
        <id>Q3KQV3</id>
        <label>ZNF792</label>
    </interactant>
    <organismsDiffer>false</organismsDiffer>
    <experiments>6</experiments>
</comment>
<comment type="interaction">
    <interactant intactId="EBI-10172526">
        <id>Q9UJV3-2</id>
    </interactant>
    <interactant intactId="EBI-527853">
        <id>Q9UGI0</id>
        <label>ZRANB1</label>
    </interactant>
    <organismsDiffer>false</organismsDiffer>
    <experiments>3</experiments>
</comment>
<comment type="interaction">
    <interactant intactId="EBI-10172526">
        <id>Q9UJV3-2</id>
    </interactant>
    <interactant intactId="EBI-1210440">
        <id>O43309</id>
        <label>ZSCAN12</label>
    </interactant>
    <organismsDiffer>false</organismsDiffer>
    <experiments>6</experiments>
</comment>
<comment type="interaction">
    <interactant intactId="EBI-10172526">
        <id>Q9UJV3-2</id>
    </interactant>
    <interactant intactId="EBI-10175879">
        <id>B3KPU6</id>
    </interactant>
    <organismsDiffer>false</organismsDiffer>
    <experiments>3</experiments>
</comment>
<comment type="subcellular location">
    <subcellularLocation>
        <location evidence="9">Cytoplasm</location>
    </subcellularLocation>
    <subcellularLocation>
        <location evidence="9">Cytoplasm</location>
        <location evidence="9">Cytoskeleton</location>
    </subcellularLocation>
    <text evidence="9">Microtubule-associated.</text>
</comment>
<comment type="alternative products">
    <event type="alternative splicing"/>
    <isoform>
        <id>Q9UJV3-1</id>
        <name>1</name>
        <sequence type="displayed"/>
    </isoform>
    <isoform>
        <id>Q9UJV3-2</id>
        <name>2</name>
        <sequence type="described" ref="VSP_009009"/>
    </isoform>
</comment>
<comment type="tissue specificity">
    <text>Low level in fetal kidney and lung, and in adult prostate, ovary and small intestine.</text>
</comment>
<comment type="domain">
    <text evidence="1">The tripartite motif (RBCC; RING- and B box-type zinc fingers and coiled coil domains) mediates dimerization.</text>
</comment>
<comment type="domain">
    <text>Associates with microtubules in a manner that is dependent on the C-terminal B30.2 domain.</text>
</comment>
<comment type="PTM">
    <text evidence="7">Phosphorylated on serine and threonine residues.</text>
</comment>
<comment type="disease" evidence="8">
    <disease id="DI-04186">
        <name>Intellectual developmental disorder, X-linked 101</name>
        <acronym>XLID101</acronym>
        <description>A disorder characterized by significantly below average general intellectual functioning associated with impairments in adaptive behavior and manifested during the developmental period. Intellectual deficiency is the only primary symptom of non-syndromic X-linked forms, while syndromic forms present with associated physical, neurological and/or psychiatric manifestations. XLID101 clinical features include global developmental delay, hyperactivity often with aggressive outbursts, and seizures in some patients. Several affected individuals have long face, prominent ears, and squint or strabismus.</description>
        <dbReference type="MIM" id="300928"/>
    </disease>
    <text>The disease is caused by variants affecting the gene represented in this entry.</text>
</comment>
<comment type="similarity">
    <text evidence="14">Belongs to the TRIM/RBCC family.</text>
</comment>
<comment type="caution">
    <text evidence="14">It is uncertain whether Met-1 or Met-21 is the initiator.</text>
</comment>
<comment type="sequence caution" evidence="14">
    <conflict type="erroneous initiation">
        <sequence resource="EMBL-CDS" id="AAF07341"/>
    </conflict>
    <text>Truncated N-terminus.</text>
</comment>
<comment type="sequence caution" evidence="14">
    <conflict type="erroneous initiation">
        <sequence resource="EMBL-CDS" id="AAH17707"/>
    </conflict>
    <text>Truncated N-terminus.</text>
</comment>
<comment type="sequence caution" evidence="14">
    <conflict type="erroneous initiation">
        <sequence resource="EMBL-CDS" id="CAB56154"/>
    </conflict>
    <text>Truncated N-terminus.</text>
</comment>
<sequence>MGESPASVVLNASGGLFSLKMETLESELTCPICLELFEDPLLLPCAHSLCFSCAHRILVSSCSSGESIEPITAFQCPTCRYVISLNHRGLDGLKRNVTLQNIIDRFQKASVSGPNSPSESRRERTYRPTTAMSSERIACQFCEQDPPRDAVKTCITCEVSYCDRCLRATHPNKKPFTSHRLVEPVPDTHLRGITCLDHENEKVNMYCVSDDQLICALCKLVGRHRDHQVASLNDRFEKLKQTLEMNLTNLVKRNSELENQMAKLIQICQQVEVNTAMHEAKLMEECDELVEIIQQRKQMIAVKIKETKVMKLRKLAQQVANCRQCLERSTVLINQAEHILKENDQARFLQSAKNIAERVAMATASSQVLIPDINFNDAFENFALDFSREKKLLEGLDYLTAPNPPSIREELCTASHDTITVHWISDDEFSISSYELQYTIFTGQANFISKSWCSWGLWPEIRKCKEAVSCSRLAGAPRGLYNSVDSWMIVPNIKQNHYTVHGLQSGTRYIFIVKAINQAGSRNSEPTRLKTNSQPFKLDPKMTHKKLKISNDGLQMEKDESSLKKSHTPERFSGTGCYGAAGNIFIDSGCHYWEVVMGSSTWYAIGIAYKSAPKNEWIGKNASSWVFSRCNSNFVVRHNNKEMLVDVPPHLKRLGVLLDYDNNMLSFYDPANSLHLHTFDVTFILPVCPTFTIWNKSLMILSGLPAPDFIDYPERQECNCRPQESPYVSGMKTCH</sequence>
<accession>Q9UJV3</accession>
<accession>A6NEL8</accession>
<accession>A6PVI5</accession>
<accession>Q5JYF5</accession>
<accession>Q8WWK1</accession>
<accession>Q9UJR9</accession>
<reference key="1">
    <citation type="journal article" date="1999" name="Genomics">
        <title>FXY2/MID2, a gene related to the X-linked Opitz syndrome gene FXY/MID1, maps to Xq22 and encodes a FNIII domain-containing protein that associates with microtubules.</title>
        <authorList>
            <person name="Perry J."/>
            <person name="Short K.M."/>
            <person name="Romer J.T."/>
            <person name="Swift S."/>
            <person name="Cox T.C."/>
            <person name="Ashworth A."/>
        </authorList>
    </citation>
    <scope>NUCLEOTIDE SEQUENCE [MRNA] (ISOFORM 2)</scope>
</reference>
<reference key="2">
    <citation type="journal article" date="1999" name="Hum. Mol. Genet.">
        <title>MID2, a homologue of the Opitz syndrome gene MID1: similarities in a sub-cellular localization and differences in expression during development.</title>
        <authorList>
            <person name="Buchner G."/>
            <person name="Montini E."/>
            <person name="Andolfi G."/>
            <person name="Quaderi N."/>
            <person name="Cainarca S."/>
            <person name="Messali S."/>
            <person name="Bassi M.T."/>
            <person name="Ballabio A."/>
            <person name="Meroni G."/>
            <person name="Franco B."/>
        </authorList>
    </citation>
    <scope>NUCLEOTIDE SEQUENCE [MRNA] (ISOFORM 1)</scope>
    <source>
        <tissue>Fetal brain</tissue>
    </source>
</reference>
<reference key="3">
    <citation type="journal article" date="2005" name="Nature">
        <title>The DNA sequence of the human X chromosome.</title>
        <authorList>
            <person name="Ross M.T."/>
            <person name="Grafham D.V."/>
            <person name="Coffey A.J."/>
            <person name="Scherer S."/>
            <person name="McLay K."/>
            <person name="Muzny D."/>
            <person name="Platzer M."/>
            <person name="Howell G.R."/>
            <person name="Burrows C."/>
            <person name="Bird C.P."/>
            <person name="Frankish A."/>
            <person name="Lovell F.L."/>
            <person name="Howe K.L."/>
            <person name="Ashurst J.L."/>
            <person name="Fulton R.S."/>
            <person name="Sudbrak R."/>
            <person name="Wen G."/>
            <person name="Jones M.C."/>
            <person name="Hurles M.E."/>
            <person name="Andrews T.D."/>
            <person name="Scott C.E."/>
            <person name="Searle S."/>
            <person name="Ramser J."/>
            <person name="Whittaker A."/>
            <person name="Deadman R."/>
            <person name="Carter N.P."/>
            <person name="Hunt S.E."/>
            <person name="Chen R."/>
            <person name="Cree A."/>
            <person name="Gunaratne P."/>
            <person name="Havlak P."/>
            <person name="Hodgson A."/>
            <person name="Metzker M.L."/>
            <person name="Richards S."/>
            <person name="Scott G."/>
            <person name="Steffen D."/>
            <person name="Sodergren E."/>
            <person name="Wheeler D.A."/>
            <person name="Worley K.C."/>
            <person name="Ainscough R."/>
            <person name="Ambrose K.D."/>
            <person name="Ansari-Lari M.A."/>
            <person name="Aradhya S."/>
            <person name="Ashwell R.I."/>
            <person name="Babbage A.K."/>
            <person name="Bagguley C.L."/>
            <person name="Ballabio A."/>
            <person name="Banerjee R."/>
            <person name="Barker G.E."/>
            <person name="Barlow K.F."/>
            <person name="Barrett I.P."/>
            <person name="Bates K.N."/>
            <person name="Beare D.M."/>
            <person name="Beasley H."/>
            <person name="Beasley O."/>
            <person name="Beck A."/>
            <person name="Bethel G."/>
            <person name="Blechschmidt K."/>
            <person name="Brady N."/>
            <person name="Bray-Allen S."/>
            <person name="Bridgeman A.M."/>
            <person name="Brown A.J."/>
            <person name="Brown M.J."/>
            <person name="Bonnin D."/>
            <person name="Bruford E.A."/>
            <person name="Buhay C."/>
            <person name="Burch P."/>
            <person name="Burford D."/>
            <person name="Burgess J."/>
            <person name="Burrill W."/>
            <person name="Burton J."/>
            <person name="Bye J.M."/>
            <person name="Carder C."/>
            <person name="Carrel L."/>
            <person name="Chako J."/>
            <person name="Chapman J.C."/>
            <person name="Chavez D."/>
            <person name="Chen E."/>
            <person name="Chen G."/>
            <person name="Chen Y."/>
            <person name="Chen Z."/>
            <person name="Chinault C."/>
            <person name="Ciccodicola A."/>
            <person name="Clark S.Y."/>
            <person name="Clarke G."/>
            <person name="Clee C.M."/>
            <person name="Clegg S."/>
            <person name="Clerc-Blankenburg K."/>
            <person name="Clifford K."/>
            <person name="Cobley V."/>
            <person name="Cole C.G."/>
            <person name="Conquer J.S."/>
            <person name="Corby N."/>
            <person name="Connor R.E."/>
            <person name="David R."/>
            <person name="Davies J."/>
            <person name="Davis C."/>
            <person name="Davis J."/>
            <person name="Delgado O."/>
            <person name="Deshazo D."/>
            <person name="Dhami P."/>
            <person name="Ding Y."/>
            <person name="Dinh H."/>
            <person name="Dodsworth S."/>
            <person name="Draper H."/>
            <person name="Dugan-Rocha S."/>
            <person name="Dunham A."/>
            <person name="Dunn M."/>
            <person name="Durbin K.J."/>
            <person name="Dutta I."/>
            <person name="Eades T."/>
            <person name="Ellwood M."/>
            <person name="Emery-Cohen A."/>
            <person name="Errington H."/>
            <person name="Evans K.L."/>
            <person name="Faulkner L."/>
            <person name="Francis F."/>
            <person name="Frankland J."/>
            <person name="Fraser A.E."/>
            <person name="Galgoczy P."/>
            <person name="Gilbert J."/>
            <person name="Gill R."/>
            <person name="Gloeckner G."/>
            <person name="Gregory S.G."/>
            <person name="Gribble S."/>
            <person name="Griffiths C."/>
            <person name="Grocock R."/>
            <person name="Gu Y."/>
            <person name="Gwilliam R."/>
            <person name="Hamilton C."/>
            <person name="Hart E.A."/>
            <person name="Hawes A."/>
            <person name="Heath P.D."/>
            <person name="Heitmann K."/>
            <person name="Hennig S."/>
            <person name="Hernandez J."/>
            <person name="Hinzmann B."/>
            <person name="Ho S."/>
            <person name="Hoffs M."/>
            <person name="Howden P.J."/>
            <person name="Huckle E.J."/>
            <person name="Hume J."/>
            <person name="Hunt P.J."/>
            <person name="Hunt A.R."/>
            <person name="Isherwood J."/>
            <person name="Jacob L."/>
            <person name="Johnson D."/>
            <person name="Jones S."/>
            <person name="de Jong P.J."/>
            <person name="Joseph S.S."/>
            <person name="Keenan S."/>
            <person name="Kelly S."/>
            <person name="Kershaw J.K."/>
            <person name="Khan Z."/>
            <person name="Kioschis P."/>
            <person name="Klages S."/>
            <person name="Knights A.J."/>
            <person name="Kosiura A."/>
            <person name="Kovar-Smith C."/>
            <person name="Laird G.K."/>
            <person name="Langford C."/>
            <person name="Lawlor S."/>
            <person name="Leversha M."/>
            <person name="Lewis L."/>
            <person name="Liu W."/>
            <person name="Lloyd C."/>
            <person name="Lloyd D.M."/>
            <person name="Loulseged H."/>
            <person name="Loveland J.E."/>
            <person name="Lovell J.D."/>
            <person name="Lozado R."/>
            <person name="Lu J."/>
            <person name="Lyne R."/>
            <person name="Ma J."/>
            <person name="Maheshwari M."/>
            <person name="Matthews L.H."/>
            <person name="McDowall J."/>
            <person name="McLaren S."/>
            <person name="McMurray A."/>
            <person name="Meidl P."/>
            <person name="Meitinger T."/>
            <person name="Milne S."/>
            <person name="Miner G."/>
            <person name="Mistry S.L."/>
            <person name="Morgan M."/>
            <person name="Morris S."/>
            <person name="Mueller I."/>
            <person name="Mullikin J.C."/>
            <person name="Nguyen N."/>
            <person name="Nordsiek G."/>
            <person name="Nyakatura G."/>
            <person name="O'dell C.N."/>
            <person name="Okwuonu G."/>
            <person name="Palmer S."/>
            <person name="Pandian R."/>
            <person name="Parker D."/>
            <person name="Parrish J."/>
            <person name="Pasternak S."/>
            <person name="Patel D."/>
            <person name="Pearce A.V."/>
            <person name="Pearson D.M."/>
            <person name="Pelan S.E."/>
            <person name="Perez L."/>
            <person name="Porter K.M."/>
            <person name="Ramsey Y."/>
            <person name="Reichwald K."/>
            <person name="Rhodes S."/>
            <person name="Ridler K.A."/>
            <person name="Schlessinger D."/>
            <person name="Schueler M.G."/>
            <person name="Sehra H.K."/>
            <person name="Shaw-Smith C."/>
            <person name="Shen H."/>
            <person name="Sheridan E.M."/>
            <person name="Shownkeen R."/>
            <person name="Skuce C.D."/>
            <person name="Smith M.L."/>
            <person name="Sotheran E.C."/>
            <person name="Steingruber H.E."/>
            <person name="Steward C.A."/>
            <person name="Storey R."/>
            <person name="Swann R.M."/>
            <person name="Swarbreck D."/>
            <person name="Tabor P.E."/>
            <person name="Taudien S."/>
            <person name="Taylor T."/>
            <person name="Teague B."/>
            <person name="Thomas K."/>
            <person name="Thorpe A."/>
            <person name="Timms K."/>
            <person name="Tracey A."/>
            <person name="Trevanion S."/>
            <person name="Tromans A.C."/>
            <person name="d'Urso M."/>
            <person name="Verduzco D."/>
            <person name="Villasana D."/>
            <person name="Waldron L."/>
            <person name="Wall M."/>
            <person name="Wang Q."/>
            <person name="Warren J."/>
            <person name="Warry G.L."/>
            <person name="Wei X."/>
            <person name="West A."/>
            <person name="Whitehead S.L."/>
            <person name="Whiteley M.N."/>
            <person name="Wilkinson J.E."/>
            <person name="Willey D.L."/>
            <person name="Williams G."/>
            <person name="Williams L."/>
            <person name="Williamson A."/>
            <person name="Williamson H."/>
            <person name="Wilming L."/>
            <person name="Woodmansey R.L."/>
            <person name="Wray P.W."/>
            <person name="Yen J."/>
            <person name="Zhang J."/>
            <person name="Zhou J."/>
            <person name="Zoghbi H."/>
            <person name="Zorilla S."/>
            <person name="Buck D."/>
            <person name="Reinhardt R."/>
            <person name="Poustka A."/>
            <person name="Rosenthal A."/>
            <person name="Lehrach H."/>
            <person name="Meindl A."/>
            <person name="Minx P.J."/>
            <person name="Hillier L.W."/>
            <person name="Willard H.F."/>
            <person name="Wilson R.K."/>
            <person name="Waterston R.H."/>
            <person name="Rice C.M."/>
            <person name="Vaudin M."/>
            <person name="Coulson A."/>
            <person name="Nelson D.L."/>
            <person name="Weinstock G."/>
            <person name="Sulston J.E."/>
            <person name="Durbin R.M."/>
            <person name="Hubbard T."/>
            <person name="Gibbs R.A."/>
            <person name="Beck S."/>
            <person name="Rogers J."/>
            <person name="Bentley D.R."/>
        </authorList>
    </citation>
    <scope>NUCLEOTIDE SEQUENCE [LARGE SCALE GENOMIC DNA]</scope>
</reference>
<reference key="4">
    <citation type="journal article" date="2004" name="Genome Res.">
        <title>The status, quality, and expansion of the NIH full-length cDNA project: the Mammalian Gene Collection (MGC).</title>
        <authorList>
            <consortium name="The MGC Project Team"/>
        </authorList>
    </citation>
    <scope>NUCLEOTIDE SEQUENCE [LARGE SCALE MRNA] OF 12-735 (ISOFORM 2)</scope>
    <source>
        <tissue>Kidney</tissue>
    </source>
</reference>
<reference key="5">
    <citation type="submission" date="2003-05" db="EMBL/GenBank/DDBJ databases">
        <title>Cloning of human full-length CDSs in BD Creator(TM) system donor vector.</title>
        <authorList>
            <person name="Kalnine N."/>
            <person name="Chen X."/>
            <person name="Rolfs A."/>
            <person name="Halleck A."/>
            <person name="Hines L."/>
            <person name="Eisenstein S."/>
            <person name="Koundinya M."/>
            <person name="Raphael J."/>
            <person name="Moreira D."/>
            <person name="Kelley T."/>
            <person name="LaBaer J."/>
            <person name="Lin Y."/>
            <person name="Phelan M."/>
            <person name="Farmer A."/>
        </authorList>
    </citation>
    <scope>NUCLEOTIDE SEQUENCE [LARGE SCALE MRNA] OF 21-735 (ISOFORM 2)</scope>
</reference>
<reference key="6">
    <citation type="journal article" date="2002" name="BMC Cell Biol.">
        <title>MID1 and MID2 homo- and heterodimerise to tether the rapamycin-sensitive PP2A regulatory subunit, Alpha 4, to microtubules: implications for the clinical variability of X-linked Opitz GBBB syndrome and other developmental disorders.</title>
        <authorList>
            <person name="Short K.M."/>
            <person name="Hopwood B."/>
            <person name="Yi Z."/>
            <person name="Cox T.C."/>
        </authorList>
    </citation>
    <scope>INTERACTION WITH IGBP1</scope>
    <scope>PHOSPHORYLATION</scope>
</reference>
<reference key="7">
    <citation type="journal article" date="2014" name="Hum. Mutat.">
        <title>Targeted deep resequencing identifies MID2 mutation for X-linked intellectual disability with varied disease severity in a large kindred from India.</title>
        <authorList>
            <person name="Geetha T.S."/>
            <person name="Michealraj K.A."/>
            <person name="Kabra M."/>
            <person name="Kaur G."/>
            <person name="Juyal R.C."/>
            <person name="Thelma B.K."/>
        </authorList>
    </citation>
    <scope>FUNCTION</scope>
    <scope>INVOLVEMENT IN XLID101</scope>
    <scope>VARIANT XLID101 GLN-347</scope>
    <scope>VARIANT SER-343</scope>
    <scope>CHARACTERIZATION OF VARIANT XLID101 GLN-347</scope>
    <scope>CHARACTERIZATION OF VARIANT SER-343</scope>
</reference>
<reference key="8">
    <citation type="journal article" date="2022" name="J. Cell Biol.">
        <title>The E3 ligase TRIM1 ubiquitinates LRRK2 and controls its localization, degradation, and toxicity.</title>
        <authorList>
            <person name="Stormo A.E.D."/>
            <person name="Shavarebi F."/>
            <person name="FitzGibbon M."/>
            <person name="Earley E.M."/>
            <person name="Ahrendt H."/>
            <person name="Lum L.S."/>
            <person name="Verschueren E."/>
            <person name="Swaney D.L."/>
            <person name="Skibinski G."/>
            <person name="Ravisankar A."/>
            <person name="van Haren J."/>
            <person name="Davis E.J."/>
            <person name="Johnson J.R."/>
            <person name="Von Dollen J."/>
            <person name="Balen C."/>
            <person name="Porath J."/>
            <person name="Crosio C."/>
            <person name="Mirescu C."/>
            <person name="Iaccarino C."/>
            <person name="Dauer W.T."/>
            <person name="Nichols R.J."/>
            <person name="Wittmann T."/>
            <person name="Cox T.C."/>
            <person name="Finkbeiner S."/>
            <person name="Krogan N.J."/>
            <person name="Oakes S.A."/>
            <person name="Hiniker A."/>
        </authorList>
    </citation>
    <scope>FUNCTION</scope>
    <scope>CATALYTIC ACTIVITY</scope>
    <scope>SUBCELLULAR LOCATION</scope>
</reference>
<reference key="9">
    <citation type="submission" date="2006-10" db="PDB data bank">
        <title>The solution structure of the FN3 domain of human midline 2 protein.</title>
        <authorList>
            <consortium name="RIKEN structural genomics initiative (RSGI)"/>
        </authorList>
    </citation>
    <scope>STRUCTURE BY NMR OF 394-537</scope>
</reference>
<feature type="chain" id="PRO_0000056193" description="Probable E3 ubiquitin-protein ligase MID2">
    <location>
        <begin position="1"/>
        <end position="735"/>
    </location>
</feature>
<feature type="domain" description="COS" evidence="6">
    <location>
        <begin position="340"/>
        <end position="399"/>
    </location>
</feature>
<feature type="domain" description="Fibronectin type-III">
    <location>
        <begin position="398"/>
        <end position="531"/>
    </location>
</feature>
<feature type="domain" description="B30.2/SPRY" evidence="5">
    <location>
        <begin position="516"/>
        <end position="709"/>
    </location>
</feature>
<feature type="zinc finger region" description="RING-type" evidence="4">
    <location>
        <begin position="30"/>
        <end position="80"/>
    </location>
</feature>
<feature type="zinc finger region" description="B box-type 1; degenerate" evidence="3">
    <location>
        <begin position="137"/>
        <end position="184"/>
    </location>
</feature>
<feature type="zinc finger region" description="B box-type 2" evidence="3">
    <location>
        <begin position="190"/>
        <end position="232"/>
    </location>
</feature>
<feature type="coiled-coil region" evidence="2">
    <location>
        <begin position="233"/>
        <end position="301"/>
    </location>
</feature>
<feature type="binding site" evidence="3">
    <location>
        <position position="195"/>
    </location>
    <ligand>
        <name>Zn(2+)</name>
        <dbReference type="ChEBI" id="CHEBI:29105"/>
    </ligand>
</feature>
<feature type="binding site" evidence="3">
    <location>
        <position position="198"/>
    </location>
    <ligand>
        <name>Zn(2+)</name>
        <dbReference type="ChEBI" id="CHEBI:29105"/>
    </ligand>
</feature>
<feature type="binding site" evidence="3">
    <location>
        <position position="218"/>
    </location>
    <ligand>
        <name>Zn(2+)</name>
        <dbReference type="ChEBI" id="CHEBI:29105"/>
    </ligand>
</feature>
<feature type="binding site" evidence="3">
    <location>
        <position position="224"/>
    </location>
    <ligand>
        <name>Zn(2+)</name>
        <dbReference type="ChEBI" id="CHEBI:29105"/>
    </ligand>
</feature>
<feature type="splice variant" id="VSP_009009" description="In isoform 2." evidence="10 11 13">
    <location>
        <begin position="450"/>
        <end position="479"/>
    </location>
</feature>
<feature type="sequence variant" id="VAR_071835" description="The protein is normally bound to microtubules; dbSNP:rs551253128." evidence="8">
    <original>N</original>
    <variation>S</variation>
    <location>
        <position position="343"/>
    </location>
</feature>
<feature type="sequence variant" id="VAR_071836" description="In XLID101; the mutant is abnormally localized in aggregates or enclosed in cytoplasmic vesicles rather than being bound to microtubules; dbSNP:rs587777605." evidence="8">
    <original>R</original>
    <variation>Q</variation>
    <location>
        <position position="347"/>
    </location>
</feature>
<feature type="sequence variant" id="VAR_052123" description="In dbSNP:rs12849510.">
    <original>A</original>
    <variation>D</variation>
    <location>
        <position position="378"/>
    </location>
</feature>
<feature type="strand" evidence="15">
    <location>
        <begin position="199"/>
        <end position="201"/>
    </location>
</feature>
<feature type="strand" evidence="15">
    <location>
        <begin position="205"/>
        <end position="207"/>
    </location>
</feature>
<feature type="turn" evidence="15">
    <location>
        <begin position="208"/>
        <end position="211"/>
    </location>
</feature>
<feature type="strand" evidence="15">
    <location>
        <begin position="212"/>
        <end position="214"/>
    </location>
</feature>
<feature type="helix" evidence="15">
    <location>
        <begin position="216"/>
        <end position="220"/>
    </location>
</feature>
<feature type="turn" evidence="15">
    <location>
        <begin position="223"/>
        <end position="226"/>
    </location>
</feature>
<feature type="strand" evidence="16">
    <location>
        <begin position="406"/>
        <end position="415"/>
    </location>
</feature>
<feature type="strand" evidence="16">
    <location>
        <begin position="418"/>
        <end position="424"/>
    </location>
</feature>
<feature type="strand" evidence="16">
    <location>
        <begin position="429"/>
        <end position="442"/>
    </location>
</feature>
<feature type="helix" evidence="16">
    <location>
        <begin position="483"/>
        <end position="486"/>
    </location>
</feature>
<feature type="strand" evidence="16">
    <location>
        <begin position="487"/>
        <end position="493"/>
    </location>
</feature>
<feature type="strand" evidence="16">
    <location>
        <begin position="495"/>
        <end position="502"/>
    </location>
</feature>
<feature type="strand" evidence="16">
    <location>
        <begin position="508"/>
        <end position="519"/>
    </location>
</feature>
<feature type="strand" evidence="16">
    <location>
        <begin position="521"/>
        <end position="523"/>
    </location>
</feature>
<feature type="strand" evidence="16">
    <location>
        <begin position="527"/>
        <end position="530"/>
    </location>
</feature>
<feature type="helix" evidence="17">
    <location>
        <begin position="540"/>
        <end position="542"/>
    </location>
</feature>
<feature type="strand" evidence="17">
    <location>
        <begin position="547"/>
        <end position="549"/>
    </location>
</feature>
<feature type="strand" evidence="17">
    <location>
        <begin position="555"/>
        <end position="558"/>
    </location>
</feature>
<feature type="strand" evidence="17">
    <location>
        <begin position="578"/>
        <end position="583"/>
    </location>
</feature>
<feature type="strand" evidence="17">
    <location>
        <begin position="588"/>
        <end position="596"/>
    </location>
</feature>
<feature type="strand" evidence="17">
    <location>
        <begin position="601"/>
        <end position="608"/>
    </location>
</feature>
<feature type="strand" evidence="17">
    <location>
        <begin position="624"/>
        <end position="630"/>
    </location>
</feature>
<feature type="strand" evidence="17">
    <location>
        <begin position="633"/>
        <end position="638"/>
    </location>
</feature>
<feature type="strand" evidence="17">
    <location>
        <begin position="641"/>
        <end position="644"/>
    </location>
</feature>
<feature type="strand" evidence="17">
    <location>
        <begin position="653"/>
        <end position="659"/>
    </location>
</feature>
<feature type="turn" evidence="17">
    <location>
        <begin position="660"/>
        <end position="663"/>
    </location>
</feature>
<feature type="strand" evidence="17">
    <location>
        <begin position="664"/>
        <end position="669"/>
    </location>
</feature>
<feature type="helix" evidence="17">
    <location>
        <begin position="670"/>
        <end position="672"/>
    </location>
</feature>
<feature type="strand" evidence="17">
    <location>
        <begin position="674"/>
        <end position="680"/>
    </location>
</feature>
<feature type="strand" evidence="17">
    <location>
        <begin position="687"/>
        <end position="701"/>
    </location>
</feature>
<dbReference type="EC" id="2.3.2.27" evidence="9"/>
<dbReference type="EMBL" id="AF196481">
    <property type="protein sequence ID" value="AAF07341.1"/>
    <property type="status" value="ALT_INIT"/>
    <property type="molecule type" value="mRNA"/>
</dbReference>
<dbReference type="EMBL" id="Y18880">
    <property type="protein sequence ID" value="CAB56154.1"/>
    <property type="status" value="ALT_INIT"/>
    <property type="molecule type" value="mRNA"/>
</dbReference>
<dbReference type="EMBL" id="AL034399">
    <property type="status" value="NOT_ANNOTATED_CDS"/>
    <property type="molecule type" value="Genomic_DNA"/>
</dbReference>
<dbReference type="EMBL" id="AL109946">
    <property type="status" value="NOT_ANNOTATED_CDS"/>
    <property type="molecule type" value="Genomic_DNA"/>
</dbReference>
<dbReference type="EMBL" id="BC017707">
    <property type="protein sequence ID" value="AAH17707.1"/>
    <property type="status" value="ALT_INIT"/>
    <property type="molecule type" value="mRNA"/>
</dbReference>
<dbReference type="EMBL" id="BT006663">
    <property type="protein sequence ID" value="AAP35309.1"/>
    <property type="molecule type" value="mRNA"/>
</dbReference>
<dbReference type="CCDS" id="CCDS14532.2">
    <molecule id="Q9UJV3-1"/>
</dbReference>
<dbReference type="CCDS" id="CCDS14533.2">
    <molecule id="Q9UJV3-2"/>
</dbReference>
<dbReference type="RefSeq" id="NP_036348.2">
    <molecule id="Q9UJV3-1"/>
    <property type="nucleotide sequence ID" value="NM_012216.4"/>
</dbReference>
<dbReference type="RefSeq" id="NP_438112.2">
    <molecule id="Q9UJV3-2"/>
    <property type="nucleotide sequence ID" value="NM_052817.3"/>
</dbReference>
<dbReference type="RefSeq" id="XP_005262119.1">
    <property type="nucleotide sequence ID" value="XM_005262062.4"/>
</dbReference>
<dbReference type="RefSeq" id="XP_016884728.1">
    <property type="nucleotide sequence ID" value="XM_017029239.1"/>
</dbReference>
<dbReference type="PDB" id="2DJA">
    <property type="method" value="NMR"/>
    <property type="chains" value="A=182-252"/>
</dbReference>
<dbReference type="PDB" id="2DMK">
    <property type="method" value="NMR"/>
    <property type="chains" value="A=394-537"/>
</dbReference>
<dbReference type="PDB" id="7QRZ">
    <property type="method" value="X-ray"/>
    <property type="resolution" value="1.57 A"/>
    <property type="chains" value="A=532-719"/>
</dbReference>
<dbReference type="PDBsum" id="2DJA"/>
<dbReference type="PDBsum" id="2DMK"/>
<dbReference type="PDBsum" id="7QRZ"/>
<dbReference type="BMRB" id="Q9UJV3"/>
<dbReference type="SMR" id="Q9UJV3"/>
<dbReference type="BioGRID" id="116231">
    <property type="interactions" value="283"/>
</dbReference>
<dbReference type="FunCoup" id="Q9UJV3">
    <property type="interactions" value="119"/>
</dbReference>
<dbReference type="IntAct" id="Q9UJV3">
    <property type="interactions" value="257"/>
</dbReference>
<dbReference type="MINT" id="Q9UJV3"/>
<dbReference type="STRING" id="9606.ENSP00000262843"/>
<dbReference type="MoonDB" id="Q9UJV3">
    <property type="type" value="Predicted"/>
</dbReference>
<dbReference type="iPTMnet" id="Q9UJV3"/>
<dbReference type="PhosphoSitePlus" id="Q9UJV3"/>
<dbReference type="BioMuta" id="MID2"/>
<dbReference type="DMDM" id="294862489"/>
<dbReference type="jPOST" id="Q9UJV3"/>
<dbReference type="MassIVE" id="Q9UJV3"/>
<dbReference type="PaxDb" id="9606-ENSP00000262843"/>
<dbReference type="PeptideAtlas" id="Q9UJV3"/>
<dbReference type="ProteomicsDB" id="84662">
    <molecule id="Q9UJV3-1"/>
</dbReference>
<dbReference type="ProteomicsDB" id="84663">
    <molecule id="Q9UJV3-2"/>
</dbReference>
<dbReference type="Antibodypedia" id="29334">
    <property type="antibodies" value="182 antibodies from 26 providers"/>
</dbReference>
<dbReference type="DNASU" id="11043"/>
<dbReference type="Ensembl" id="ENST00000262843.11">
    <molecule id="Q9UJV3-1"/>
    <property type="protein sequence ID" value="ENSP00000262843.6"/>
    <property type="gene ID" value="ENSG00000080561.14"/>
</dbReference>
<dbReference type="Ensembl" id="ENST00000443968.2">
    <molecule id="Q9UJV3-2"/>
    <property type="protein sequence ID" value="ENSP00000413976.2"/>
    <property type="gene ID" value="ENSG00000080561.14"/>
</dbReference>
<dbReference type="GeneID" id="11043"/>
<dbReference type="KEGG" id="hsa:11043"/>
<dbReference type="MANE-Select" id="ENST00000262843.11">
    <property type="protein sequence ID" value="ENSP00000262843.6"/>
    <property type="RefSeq nucleotide sequence ID" value="NM_012216.4"/>
    <property type="RefSeq protein sequence ID" value="NP_036348.2"/>
</dbReference>
<dbReference type="UCSC" id="uc004enk.4">
    <molecule id="Q9UJV3-1"/>
    <property type="organism name" value="human"/>
</dbReference>
<dbReference type="AGR" id="HGNC:7096"/>
<dbReference type="CTD" id="11043"/>
<dbReference type="DisGeNET" id="11043"/>
<dbReference type="GeneCards" id="MID2"/>
<dbReference type="HGNC" id="HGNC:7096">
    <property type="gene designation" value="MID2"/>
</dbReference>
<dbReference type="HPA" id="ENSG00000080561">
    <property type="expression patterns" value="Low tissue specificity"/>
</dbReference>
<dbReference type="MalaCards" id="MID2"/>
<dbReference type="MIM" id="300204">
    <property type="type" value="gene"/>
</dbReference>
<dbReference type="MIM" id="300928">
    <property type="type" value="phenotype"/>
</dbReference>
<dbReference type="neXtProt" id="NX_Q9UJV3"/>
<dbReference type="OpenTargets" id="ENSG00000080561"/>
<dbReference type="Orphanet" id="777">
    <property type="disease" value="X-linked non-syndromic intellectual disability"/>
</dbReference>
<dbReference type="PharmGKB" id="PA30817"/>
<dbReference type="VEuPathDB" id="HostDB:ENSG00000080561"/>
<dbReference type="eggNOG" id="KOG2177">
    <property type="taxonomic scope" value="Eukaryota"/>
</dbReference>
<dbReference type="GeneTree" id="ENSGT00940000159460"/>
<dbReference type="HOGENOM" id="CLU_013137_19_4_1"/>
<dbReference type="InParanoid" id="Q9UJV3"/>
<dbReference type="OMA" id="YRPSTTM"/>
<dbReference type="OrthoDB" id="9049620at2759"/>
<dbReference type="PAN-GO" id="Q9UJV3">
    <property type="GO annotations" value="3 GO annotations based on evolutionary models"/>
</dbReference>
<dbReference type="PhylomeDB" id="Q9UJV3"/>
<dbReference type="TreeFam" id="TF333654"/>
<dbReference type="PathwayCommons" id="Q9UJV3"/>
<dbReference type="SignaLink" id="Q9UJV3"/>
<dbReference type="SIGNOR" id="Q9UJV3"/>
<dbReference type="UniPathway" id="UPA00143"/>
<dbReference type="BioGRID-ORCS" id="11043">
    <property type="hits" value="8 hits in 811 CRISPR screens"/>
</dbReference>
<dbReference type="ChiTaRS" id="MID2">
    <property type="organism name" value="human"/>
</dbReference>
<dbReference type="EvolutionaryTrace" id="Q9UJV3"/>
<dbReference type="GeneWiki" id="MID2"/>
<dbReference type="GenomeRNAi" id="11043"/>
<dbReference type="Pharos" id="Q9UJV3">
    <property type="development level" value="Tbio"/>
</dbReference>
<dbReference type="PRO" id="PR:Q9UJV3"/>
<dbReference type="Proteomes" id="UP000005640">
    <property type="component" value="Chromosome X"/>
</dbReference>
<dbReference type="RNAct" id="Q9UJV3">
    <property type="molecule type" value="protein"/>
</dbReference>
<dbReference type="Bgee" id="ENSG00000080561">
    <property type="expression patterns" value="Expressed in tibialis anterior and 179 other cell types or tissues"/>
</dbReference>
<dbReference type="ExpressionAtlas" id="Q9UJV3">
    <property type="expression patterns" value="baseline and differential"/>
</dbReference>
<dbReference type="GO" id="GO:0005737">
    <property type="term" value="C:cytoplasm"/>
    <property type="evidence" value="ECO:0007669"/>
    <property type="project" value="UniProtKB-SubCell"/>
</dbReference>
<dbReference type="GO" id="GO:0070062">
    <property type="term" value="C:extracellular exosome"/>
    <property type="evidence" value="ECO:0007005"/>
    <property type="project" value="UniProtKB"/>
</dbReference>
<dbReference type="GO" id="GO:0005874">
    <property type="term" value="C:microtubule"/>
    <property type="evidence" value="ECO:0000314"/>
    <property type="project" value="UniProtKB"/>
</dbReference>
<dbReference type="GO" id="GO:0019899">
    <property type="term" value="F:enzyme binding"/>
    <property type="evidence" value="ECO:0000353"/>
    <property type="project" value="UniProtKB"/>
</dbReference>
<dbReference type="GO" id="GO:0042802">
    <property type="term" value="F:identical protein binding"/>
    <property type="evidence" value="ECO:0000353"/>
    <property type="project" value="IntAct"/>
</dbReference>
<dbReference type="GO" id="GO:0008017">
    <property type="term" value="F:microtubule binding"/>
    <property type="evidence" value="ECO:0000315"/>
    <property type="project" value="UniProtKB"/>
</dbReference>
<dbReference type="GO" id="GO:0051219">
    <property type="term" value="F:phosphoprotein binding"/>
    <property type="evidence" value="ECO:0000353"/>
    <property type="project" value="UniProtKB"/>
</dbReference>
<dbReference type="GO" id="GO:0042803">
    <property type="term" value="F:protein homodimerization activity"/>
    <property type="evidence" value="ECO:0000314"/>
    <property type="project" value="UniProtKB"/>
</dbReference>
<dbReference type="GO" id="GO:0003713">
    <property type="term" value="F:transcription coactivator activity"/>
    <property type="evidence" value="ECO:0000314"/>
    <property type="project" value="ARUK-UCL"/>
</dbReference>
<dbReference type="GO" id="GO:0016740">
    <property type="term" value="F:transferase activity"/>
    <property type="evidence" value="ECO:0007669"/>
    <property type="project" value="UniProtKB-KW"/>
</dbReference>
<dbReference type="GO" id="GO:0008270">
    <property type="term" value="F:zinc ion binding"/>
    <property type="evidence" value="ECO:0007669"/>
    <property type="project" value="UniProtKB-KW"/>
</dbReference>
<dbReference type="GO" id="GO:0046597">
    <property type="term" value="P:host-mediated suppression of symbiont invasion"/>
    <property type="evidence" value="ECO:0000314"/>
    <property type="project" value="UniProtKB"/>
</dbReference>
<dbReference type="GO" id="GO:0045087">
    <property type="term" value="P:innate immune response"/>
    <property type="evidence" value="ECO:0000314"/>
    <property type="project" value="UniProtKB"/>
</dbReference>
<dbReference type="GO" id="GO:0032897">
    <property type="term" value="P:negative regulation of viral transcription"/>
    <property type="evidence" value="ECO:0000314"/>
    <property type="project" value="UniProtKB"/>
</dbReference>
<dbReference type="GO" id="GO:0010508">
    <property type="term" value="P:positive regulation of autophagy"/>
    <property type="evidence" value="ECO:0000315"/>
    <property type="project" value="UniProtKB"/>
</dbReference>
<dbReference type="GO" id="GO:0043123">
    <property type="term" value="P:positive regulation of canonical NF-kappaB signal transduction"/>
    <property type="evidence" value="ECO:0000314"/>
    <property type="project" value="UniProtKB"/>
</dbReference>
<dbReference type="GO" id="GO:0051091">
    <property type="term" value="P:positive regulation of DNA-binding transcription factor activity"/>
    <property type="evidence" value="ECO:0000315"/>
    <property type="project" value="UniProtKB"/>
</dbReference>
<dbReference type="GO" id="GO:0051092">
    <property type="term" value="P:positive regulation of NF-kappaB transcription factor activity"/>
    <property type="evidence" value="ECO:0000315"/>
    <property type="project" value="UniProtKB"/>
</dbReference>
<dbReference type="GO" id="GO:0035372">
    <property type="term" value="P:protein localization to microtubule"/>
    <property type="evidence" value="ECO:0000315"/>
    <property type="project" value="UniProtKB"/>
</dbReference>
<dbReference type="GO" id="GO:0016567">
    <property type="term" value="P:protein ubiquitination"/>
    <property type="evidence" value="ECO:0007669"/>
    <property type="project" value="UniProtKB-UniPathway"/>
</dbReference>
<dbReference type="GO" id="GO:0044790">
    <property type="term" value="P:suppression of viral release by host"/>
    <property type="evidence" value="ECO:0000314"/>
    <property type="project" value="UniProtKB"/>
</dbReference>
<dbReference type="CDD" id="cd19837">
    <property type="entry name" value="Bbox1_MID2_C-I"/>
    <property type="match status" value="1"/>
</dbReference>
<dbReference type="CDD" id="cd19823">
    <property type="entry name" value="Bbox2_MID2_C-I"/>
    <property type="match status" value="1"/>
</dbReference>
<dbReference type="CDD" id="cd00063">
    <property type="entry name" value="FN3"/>
    <property type="match status" value="1"/>
</dbReference>
<dbReference type="CDD" id="cd16754">
    <property type="entry name" value="RING-HC_MID2"/>
    <property type="match status" value="1"/>
</dbReference>
<dbReference type="CDD" id="cd13739">
    <property type="entry name" value="SPRY_PRY_TRIM1"/>
    <property type="match status" value="1"/>
</dbReference>
<dbReference type="FunFam" id="2.60.120.920:FF:000010">
    <property type="entry name" value="E3 ubiquitin-protein ligase Midline-1"/>
    <property type="match status" value="1"/>
</dbReference>
<dbReference type="FunFam" id="3.30.160.60:FF:000334">
    <property type="entry name" value="E3 ubiquitin-protein ligase Midline-1"/>
    <property type="match status" value="1"/>
</dbReference>
<dbReference type="FunFam" id="3.30.40.10:FF:000014">
    <property type="entry name" value="probable E3 ubiquitin-protein ligase MID2"/>
    <property type="match status" value="1"/>
</dbReference>
<dbReference type="FunFam" id="4.10.830.40:FF:000002">
    <property type="entry name" value="probable E3 ubiquitin-protein ligase MID2"/>
    <property type="match status" value="1"/>
</dbReference>
<dbReference type="Gene3D" id="2.60.120.920">
    <property type="match status" value="1"/>
</dbReference>
<dbReference type="Gene3D" id="4.10.830.40">
    <property type="match status" value="1"/>
</dbReference>
<dbReference type="Gene3D" id="3.30.160.60">
    <property type="entry name" value="Classic Zinc Finger"/>
    <property type="match status" value="1"/>
</dbReference>
<dbReference type="Gene3D" id="2.60.40.10">
    <property type="entry name" value="Immunoglobulins"/>
    <property type="match status" value="1"/>
</dbReference>
<dbReference type="Gene3D" id="3.30.40.10">
    <property type="entry name" value="Zinc/RING finger domain, C3HC4 (zinc finger)"/>
    <property type="match status" value="1"/>
</dbReference>
<dbReference type="InterPro" id="IPR001870">
    <property type="entry name" value="B30.2/SPRY"/>
</dbReference>
<dbReference type="InterPro" id="IPR043136">
    <property type="entry name" value="B30.2/SPRY_sf"/>
</dbReference>
<dbReference type="InterPro" id="IPR003649">
    <property type="entry name" value="Bbox_C"/>
</dbReference>
<dbReference type="InterPro" id="IPR003879">
    <property type="entry name" value="Butyrophylin_SPRY"/>
</dbReference>
<dbReference type="InterPro" id="IPR013320">
    <property type="entry name" value="ConA-like_dom_sf"/>
</dbReference>
<dbReference type="InterPro" id="IPR017903">
    <property type="entry name" value="COS_domain"/>
</dbReference>
<dbReference type="InterPro" id="IPR050617">
    <property type="entry name" value="E3_ligase_FN3/SPRY"/>
</dbReference>
<dbReference type="InterPro" id="IPR003961">
    <property type="entry name" value="FN3_dom"/>
</dbReference>
<dbReference type="InterPro" id="IPR036116">
    <property type="entry name" value="FN3_sf"/>
</dbReference>
<dbReference type="InterPro" id="IPR013783">
    <property type="entry name" value="Ig-like_fold"/>
</dbReference>
<dbReference type="InterPro" id="IPR047064">
    <property type="entry name" value="MID2_Bbox1_Zfn"/>
</dbReference>
<dbReference type="InterPro" id="IPR047063">
    <property type="entry name" value="MID2_Bbox2_Zfn"/>
</dbReference>
<dbReference type="InterPro" id="IPR033491">
    <property type="entry name" value="MID2_HC-RING"/>
</dbReference>
<dbReference type="InterPro" id="IPR040859">
    <property type="entry name" value="Midline-1_COS"/>
</dbReference>
<dbReference type="InterPro" id="IPR035752">
    <property type="entry name" value="SPRY/PRY_TRIM1"/>
</dbReference>
<dbReference type="InterPro" id="IPR003877">
    <property type="entry name" value="SPRY_dom"/>
</dbReference>
<dbReference type="InterPro" id="IPR027370">
    <property type="entry name" value="Znf-RING_euk"/>
</dbReference>
<dbReference type="InterPro" id="IPR000315">
    <property type="entry name" value="Znf_B-box"/>
</dbReference>
<dbReference type="InterPro" id="IPR001841">
    <property type="entry name" value="Znf_RING"/>
</dbReference>
<dbReference type="InterPro" id="IPR013083">
    <property type="entry name" value="Znf_RING/FYVE/PHD"/>
</dbReference>
<dbReference type="InterPro" id="IPR017907">
    <property type="entry name" value="Znf_RING_CS"/>
</dbReference>
<dbReference type="PANTHER" id="PTHR24099:SF12">
    <property type="entry name" value="E3 UBIQUITIN-PROTEIN LIGASE MID2-RELATED"/>
    <property type="match status" value="1"/>
</dbReference>
<dbReference type="PANTHER" id="PTHR24099">
    <property type="entry name" value="E3 UBIQUITIN-PROTEIN LIGASE TRIM36-RELATED"/>
    <property type="match status" value="1"/>
</dbReference>
<dbReference type="Pfam" id="PF22586">
    <property type="entry name" value="ANCHR-like_BBOX"/>
    <property type="match status" value="1"/>
</dbReference>
<dbReference type="Pfam" id="PF18568">
    <property type="entry name" value="COS"/>
    <property type="match status" value="1"/>
</dbReference>
<dbReference type="Pfam" id="PF00041">
    <property type="entry name" value="fn3"/>
    <property type="match status" value="1"/>
</dbReference>
<dbReference type="Pfam" id="PF00622">
    <property type="entry name" value="SPRY"/>
    <property type="match status" value="1"/>
</dbReference>
<dbReference type="Pfam" id="PF00643">
    <property type="entry name" value="zf-B_box"/>
    <property type="match status" value="1"/>
</dbReference>
<dbReference type="Pfam" id="PF13445">
    <property type="entry name" value="zf-RING_UBOX"/>
    <property type="match status" value="1"/>
</dbReference>
<dbReference type="PRINTS" id="PR01407">
    <property type="entry name" value="BUTYPHLNCDUF"/>
</dbReference>
<dbReference type="SMART" id="SM00502">
    <property type="entry name" value="BBC"/>
    <property type="match status" value="1"/>
</dbReference>
<dbReference type="SMART" id="SM00336">
    <property type="entry name" value="BBOX"/>
    <property type="match status" value="2"/>
</dbReference>
<dbReference type="SMART" id="SM00060">
    <property type="entry name" value="FN3"/>
    <property type="match status" value="1"/>
</dbReference>
<dbReference type="SMART" id="SM00184">
    <property type="entry name" value="RING"/>
    <property type="match status" value="1"/>
</dbReference>
<dbReference type="SMART" id="SM00449">
    <property type="entry name" value="SPRY"/>
    <property type="match status" value="1"/>
</dbReference>
<dbReference type="SUPFAM" id="SSF57845">
    <property type="entry name" value="B-box zinc-binding domain"/>
    <property type="match status" value="1"/>
</dbReference>
<dbReference type="SUPFAM" id="SSF49899">
    <property type="entry name" value="Concanavalin A-like lectins/glucanases"/>
    <property type="match status" value="1"/>
</dbReference>
<dbReference type="SUPFAM" id="SSF49265">
    <property type="entry name" value="Fibronectin type III"/>
    <property type="match status" value="1"/>
</dbReference>
<dbReference type="SUPFAM" id="SSF57850">
    <property type="entry name" value="RING/U-box"/>
    <property type="match status" value="1"/>
</dbReference>
<dbReference type="PROSITE" id="PS50188">
    <property type="entry name" value="B302_SPRY"/>
    <property type="match status" value="1"/>
</dbReference>
<dbReference type="PROSITE" id="PS51262">
    <property type="entry name" value="COS"/>
    <property type="match status" value="1"/>
</dbReference>
<dbReference type="PROSITE" id="PS50119">
    <property type="entry name" value="ZF_BBOX"/>
    <property type="match status" value="1"/>
</dbReference>
<dbReference type="PROSITE" id="PS00518">
    <property type="entry name" value="ZF_RING_1"/>
    <property type="match status" value="1"/>
</dbReference>
<dbReference type="PROSITE" id="PS50089">
    <property type="entry name" value="ZF_RING_2"/>
    <property type="match status" value="1"/>
</dbReference>
<name>TRIM1_HUMAN</name>
<evidence type="ECO:0000250" key="1"/>
<evidence type="ECO:0000255" key="2"/>
<evidence type="ECO:0000255" key="3">
    <source>
        <dbReference type="PROSITE-ProRule" id="PRU00024"/>
    </source>
</evidence>
<evidence type="ECO:0000255" key="4">
    <source>
        <dbReference type="PROSITE-ProRule" id="PRU00175"/>
    </source>
</evidence>
<evidence type="ECO:0000255" key="5">
    <source>
        <dbReference type="PROSITE-ProRule" id="PRU00548"/>
    </source>
</evidence>
<evidence type="ECO:0000255" key="6">
    <source>
        <dbReference type="PROSITE-ProRule" id="PRU00586"/>
    </source>
</evidence>
<evidence type="ECO:0000269" key="7">
    <source>
    </source>
</evidence>
<evidence type="ECO:0000269" key="8">
    <source>
    </source>
</evidence>
<evidence type="ECO:0000269" key="9">
    <source>
    </source>
</evidence>
<evidence type="ECO:0000303" key="10">
    <source>
    </source>
</evidence>
<evidence type="ECO:0000303" key="11">
    <source>
    </source>
</evidence>
<evidence type="ECO:0000303" key="12">
    <source>
    </source>
</evidence>
<evidence type="ECO:0000303" key="13">
    <source ref="5"/>
</evidence>
<evidence type="ECO:0000305" key="14"/>
<evidence type="ECO:0007829" key="15">
    <source>
        <dbReference type="PDB" id="2DJA"/>
    </source>
</evidence>
<evidence type="ECO:0007829" key="16">
    <source>
        <dbReference type="PDB" id="2DMK"/>
    </source>
</evidence>
<evidence type="ECO:0007829" key="17">
    <source>
        <dbReference type="PDB" id="7QRZ"/>
    </source>
</evidence>